<protein>
    <recommendedName>
        <fullName>Zinc finger protein SNAI1</fullName>
    </recommendedName>
    <alternativeName>
        <fullName>Protein snail homolog 1</fullName>
        <shortName>Protein sna</shortName>
    </alternativeName>
</protein>
<gene>
    <name type="primary">SNAI1</name>
    <name type="synonym">SNAH</name>
</gene>
<keyword id="KW-0002">3D-structure</keyword>
<keyword id="KW-0013">ADP-ribosylation</keyword>
<keyword id="KW-0963">Cytoplasm</keyword>
<keyword id="KW-0217">Developmental protein</keyword>
<keyword id="KW-0238">DNA-binding</keyword>
<keyword id="KW-0325">Glycoprotein</keyword>
<keyword id="KW-1017">Isopeptide bond</keyword>
<keyword id="KW-0479">Metal-binding</keyword>
<keyword id="KW-0539">Nucleus</keyword>
<keyword id="KW-0597">Phosphoprotein</keyword>
<keyword id="KW-1267">Proteomics identification</keyword>
<keyword id="KW-1185">Reference proteome</keyword>
<keyword id="KW-0677">Repeat</keyword>
<keyword id="KW-0832">Ubl conjugation</keyword>
<keyword id="KW-0862">Zinc</keyword>
<keyword id="KW-0863">Zinc-finger</keyword>
<dbReference type="EMBL" id="AF125377">
    <property type="protein sequence ID" value="AAD17332.1"/>
    <property type="molecule type" value="mRNA"/>
</dbReference>
<dbReference type="EMBL" id="AJ245657">
    <property type="protein sequence ID" value="CAB52414.1"/>
    <property type="molecule type" value="Genomic_DNA"/>
</dbReference>
<dbReference type="EMBL" id="AJ245658">
    <property type="protein sequence ID" value="CAB52414.1"/>
    <property type="status" value="JOINED"/>
    <property type="molecule type" value="Genomic_DNA"/>
</dbReference>
<dbReference type="EMBL" id="AJ245659">
    <property type="protein sequence ID" value="CAB52414.1"/>
    <property type="status" value="JOINED"/>
    <property type="molecule type" value="Genomic_DNA"/>
</dbReference>
<dbReference type="EMBL" id="AF155233">
    <property type="protein sequence ID" value="AAD52986.1"/>
    <property type="molecule type" value="Genomic_DNA"/>
</dbReference>
<dbReference type="EMBL" id="AF177731">
    <property type="protein sequence ID" value="AAD52996.1"/>
    <property type="molecule type" value="Genomic_DNA"/>
</dbReference>
<dbReference type="EMBL" id="AK313228">
    <property type="protein sequence ID" value="BAG36039.1"/>
    <property type="molecule type" value="mRNA"/>
</dbReference>
<dbReference type="EMBL" id="AL121712">
    <property type="status" value="NOT_ANNOTATED_CDS"/>
    <property type="molecule type" value="Genomic_DNA"/>
</dbReference>
<dbReference type="EMBL" id="BC012910">
    <property type="protein sequence ID" value="AAH12910.1"/>
    <property type="molecule type" value="mRNA"/>
</dbReference>
<dbReference type="EMBL" id="AF131208">
    <property type="protein sequence ID" value="AAF32527.1"/>
    <property type="molecule type" value="mRNA"/>
</dbReference>
<dbReference type="CCDS" id="CCDS13423.1"/>
<dbReference type="RefSeq" id="NP_005976.2">
    <property type="nucleotide sequence ID" value="NM_005985.3"/>
</dbReference>
<dbReference type="PDB" id="2Y48">
    <property type="method" value="X-ray"/>
    <property type="resolution" value="3.00 A"/>
    <property type="chains" value="C=2-21"/>
</dbReference>
<dbReference type="PDB" id="3W5K">
    <property type="method" value="X-ray"/>
    <property type="resolution" value="2.60 A"/>
    <property type="chains" value="B=1-264"/>
</dbReference>
<dbReference type="PDB" id="3ZMT">
    <property type="method" value="X-ray"/>
    <property type="resolution" value="3.10 A"/>
    <property type="chains" value="C=2-7"/>
</dbReference>
<dbReference type="PDB" id="4QLI">
    <property type="method" value="X-ray"/>
    <property type="resolution" value="1.45 A"/>
    <property type="chains" value="B=175-180"/>
</dbReference>
<dbReference type="PDB" id="8BOX">
    <property type="method" value="X-ray"/>
    <property type="resolution" value="2.82 A"/>
    <property type="chains" value="C=2-10"/>
</dbReference>
<dbReference type="PDB" id="8F59">
    <property type="method" value="X-ray"/>
    <property type="resolution" value="2.80 A"/>
    <property type="chains" value="C=2-10"/>
</dbReference>
<dbReference type="PDB" id="8FDV">
    <property type="method" value="X-ray"/>
    <property type="resolution" value="2.95 A"/>
    <property type="chains" value="C=2-10"/>
</dbReference>
<dbReference type="PDB" id="8FJ7">
    <property type="method" value="X-ray"/>
    <property type="resolution" value="2.80 A"/>
    <property type="chains" value="C=2-10"/>
</dbReference>
<dbReference type="PDBsum" id="2Y48"/>
<dbReference type="PDBsum" id="3W5K"/>
<dbReference type="PDBsum" id="3ZMT"/>
<dbReference type="PDBsum" id="4QLI"/>
<dbReference type="PDBsum" id="8BOX"/>
<dbReference type="PDBsum" id="8F59"/>
<dbReference type="PDBsum" id="8FDV"/>
<dbReference type="PDBsum" id="8FJ7"/>
<dbReference type="SMR" id="O95863"/>
<dbReference type="BioGRID" id="112499">
    <property type="interactions" value="528"/>
</dbReference>
<dbReference type="CORUM" id="O95863"/>
<dbReference type="DIP" id="DIP-50870N"/>
<dbReference type="FunCoup" id="O95863">
    <property type="interactions" value="1342"/>
</dbReference>
<dbReference type="IntAct" id="O95863">
    <property type="interactions" value="71"/>
</dbReference>
<dbReference type="MINT" id="O95863"/>
<dbReference type="STRING" id="9606.ENSP00000244050"/>
<dbReference type="GlyCosmos" id="O95863">
    <property type="glycosylation" value="1 site, 1 glycan"/>
</dbReference>
<dbReference type="GlyGen" id="O95863">
    <property type="glycosylation" value="2 sites, 1 O-linked glycan (1 site)"/>
</dbReference>
<dbReference type="iPTMnet" id="O95863"/>
<dbReference type="PhosphoSitePlus" id="O95863"/>
<dbReference type="SwissPalm" id="O95863"/>
<dbReference type="BioMuta" id="SNAI1"/>
<dbReference type="jPOST" id="O95863"/>
<dbReference type="MassIVE" id="O95863"/>
<dbReference type="PaxDb" id="9606-ENSP00000244050"/>
<dbReference type="PeptideAtlas" id="O95863"/>
<dbReference type="ProteomicsDB" id="51096"/>
<dbReference type="Antibodypedia" id="3135">
    <property type="antibodies" value="907 antibodies from 45 providers"/>
</dbReference>
<dbReference type="CPTC" id="O95863">
    <property type="antibodies" value="1 antibody"/>
</dbReference>
<dbReference type="DNASU" id="6615"/>
<dbReference type="Ensembl" id="ENST00000244050.3">
    <property type="protein sequence ID" value="ENSP00000244050.2"/>
    <property type="gene ID" value="ENSG00000124216.4"/>
</dbReference>
<dbReference type="GeneID" id="6615"/>
<dbReference type="KEGG" id="hsa:6615"/>
<dbReference type="MANE-Select" id="ENST00000244050.3">
    <property type="protein sequence ID" value="ENSP00000244050.2"/>
    <property type="RefSeq nucleotide sequence ID" value="NM_005985.4"/>
    <property type="RefSeq protein sequence ID" value="NP_005976.2"/>
</dbReference>
<dbReference type="UCSC" id="uc002xuz.4">
    <property type="organism name" value="human"/>
</dbReference>
<dbReference type="AGR" id="HGNC:11128"/>
<dbReference type="CTD" id="6615"/>
<dbReference type="DisGeNET" id="6615"/>
<dbReference type="GeneCards" id="SNAI1"/>
<dbReference type="HGNC" id="HGNC:11128">
    <property type="gene designation" value="SNAI1"/>
</dbReference>
<dbReference type="HPA" id="ENSG00000124216">
    <property type="expression patterns" value="Tissue enhanced (adipose)"/>
</dbReference>
<dbReference type="MIM" id="604238">
    <property type="type" value="gene"/>
</dbReference>
<dbReference type="neXtProt" id="NX_O95863"/>
<dbReference type="OpenTargets" id="ENSG00000124216"/>
<dbReference type="PharmGKB" id="PA35977"/>
<dbReference type="VEuPathDB" id="HostDB:ENSG00000124216"/>
<dbReference type="eggNOG" id="KOG2462">
    <property type="taxonomic scope" value="Eukaryota"/>
</dbReference>
<dbReference type="GeneTree" id="ENSGT00940000154681"/>
<dbReference type="HOGENOM" id="CLU_002678_42_3_1"/>
<dbReference type="InParanoid" id="O95863"/>
<dbReference type="OMA" id="TRKAFNC"/>
<dbReference type="OrthoDB" id="5428132at2759"/>
<dbReference type="PAN-GO" id="O95863">
    <property type="GO annotations" value="3 GO annotations based on evolutionary models"/>
</dbReference>
<dbReference type="PhylomeDB" id="O95863"/>
<dbReference type="TreeFam" id="TF315515"/>
<dbReference type="PathwayCommons" id="O95863"/>
<dbReference type="Reactome" id="R-HSA-8943724">
    <property type="pathway name" value="Regulation of PTEN gene transcription"/>
</dbReference>
<dbReference type="Reactome" id="R-HSA-9758919">
    <property type="pathway name" value="Epithelial-Mesenchymal Transition (EMT) during gastrulation"/>
</dbReference>
<dbReference type="Reactome" id="R-HSA-9762293">
    <property type="pathway name" value="Regulation of CDH11 gene transcription"/>
</dbReference>
<dbReference type="SignaLink" id="O95863"/>
<dbReference type="SIGNOR" id="O95863"/>
<dbReference type="BioGRID-ORCS" id="6615">
    <property type="hits" value="23 hits in 1186 CRISPR screens"/>
</dbReference>
<dbReference type="EvolutionaryTrace" id="O95863"/>
<dbReference type="GeneWiki" id="SNAI1"/>
<dbReference type="GenomeRNAi" id="6615"/>
<dbReference type="Pharos" id="O95863">
    <property type="development level" value="Tbio"/>
</dbReference>
<dbReference type="PRO" id="PR:O95863"/>
<dbReference type="Proteomes" id="UP000005640">
    <property type="component" value="Chromosome 20"/>
</dbReference>
<dbReference type="RNAct" id="O95863">
    <property type="molecule type" value="protein"/>
</dbReference>
<dbReference type="Bgee" id="ENSG00000124216">
    <property type="expression patterns" value="Expressed in omental fat pad and 101 other cell types or tissues"/>
</dbReference>
<dbReference type="GO" id="GO:0005737">
    <property type="term" value="C:cytoplasm"/>
    <property type="evidence" value="ECO:0000314"/>
    <property type="project" value="UniProtKB"/>
</dbReference>
<dbReference type="GO" id="GO:0005829">
    <property type="term" value="C:cytosol"/>
    <property type="evidence" value="ECO:0000314"/>
    <property type="project" value="HPA"/>
</dbReference>
<dbReference type="GO" id="GO:0001650">
    <property type="term" value="C:fibrillar center"/>
    <property type="evidence" value="ECO:0000314"/>
    <property type="project" value="HPA"/>
</dbReference>
<dbReference type="GO" id="GO:0043231">
    <property type="term" value="C:intracellular membrane-bounded organelle"/>
    <property type="evidence" value="ECO:0000314"/>
    <property type="project" value="HPA"/>
</dbReference>
<dbReference type="GO" id="GO:0005654">
    <property type="term" value="C:nucleoplasm"/>
    <property type="evidence" value="ECO:0000314"/>
    <property type="project" value="HPA"/>
</dbReference>
<dbReference type="GO" id="GO:0005634">
    <property type="term" value="C:nucleus"/>
    <property type="evidence" value="ECO:0000314"/>
    <property type="project" value="UniProtKB"/>
</dbReference>
<dbReference type="GO" id="GO:0005721">
    <property type="term" value="C:pericentric heterochromatin"/>
    <property type="evidence" value="ECO:0000314"/>
    <property type="project" value="UniProtKB"/>
</dbReference>
<dbReference type="GO" id="GO:0001227">
    <property type="term" value="F:DNA-binding transcription repressor activity, RNA polymerase II-specific"/>
    <property type="evidence" value="ECO:0000314"/>
    <property type="project" value="BHF-UCL"/>
</dbReference>
<dbReference type="GO" id="GO:0070888">
    <property type="term" value="F:E-box binding"/>
    <property type="evidence" value="ECO:0000314"/>
    <property type="project" value="BHF-UCL"/>
</dbReference>
<dbReference type="GO" id="GO:0019900">
    <property type="term" value="F:kinase binding"/>
    <property type="evidence" value="ECO:0000353"/>
    <property type="project" value="UniProtKB"/>
</dbReference>
<dbReference type="GO" id="GO:0000978">
    <property type="term" value="F:RNA polymerase II cis-regulatory region sequence-specific DNA binding"/>
    <property type="evidence" value="ECO:0000318"/>
    <property type="project" value="GO_Central"/>
</dbReference>
<dbReference type="GO" id="GO:0000977">
    <property type="term" value="F:RNA polymerase II transcription regulatory region sequence-specific DNA binding"/>
    <property type="evidence" value="ECO:0000314"/>
    <property type="project" value="BHF-UCL"/>
</dbReference>
<dbReference type="GO" id="GO:1990837">
    <property type="term" value="F:sequence-specific double-stranded DNA binding"/>
    <property type="evidence" value="ECO:0000314"/>
    <property type="project" value="ARUK-UCL"/>
</dbReference>
<dbReference type="GO" id="GO:0008270">
    <property type="term" value="F:zinc ion binding"/>
    <property type="evidence" value="ECO:0007669"/>
    <property type="project" value="UniProtKB-KW"/>
</dbReference>
<dbReference type="GO" id="GO:0003180">
    <property type="term" value="P:aortic valve morphogenesis"/>
    <property type="evidence" value="ECO:0000304"/>
    <property type="project" value="BHF-UCL"/>
</dbReference>
<dbReference type="GO" id="GO:0060070">
    <property type="term" value="P:canonical Wnt signaling pathway"/>
    <property type="evidence" value="ECO:0000315"/>
    <property type="project" value="BHF-UCL"/>
</dbReference>
<dbReference type="GO" id="GO:0060536">
    <property type="term" value="P:cartilage morphogenesis"/>
    <property type="evidence" value="ECO:0007669"/>
    <property type="project" value="Ensembl"/>
</dbReference>
<dbReference type="GO" id="GO:0010631">
    <property type="term" value="P:epithelial cell migration"/>
    <property type="evidence" value="ECO:0007669"/>
    <property type="project" value="Ensembl"/>
</dbReference>
<dbReference type="GO" id="GO:0001837">
    <property type="term" value="P:epithelial to mesenchymal transition"/>
    <property type="evidence" value="ECO:0000314"/>
    <property type="project" value="UniProtKB"/>
</dbReference>
<dbReference type="GO" id="GO:0003198">
    <property type="term" value="P:epithelial to mesenchymal transition involved in endocardial cushion formation"/>
    <property type="evidence" value="ECO:0000250"/>
    <property type="project" value="BHF-UCL"/>
</dbReference>
<dbReference type="GO" id="GO:0031069">
    <property type="term" value="P:hair follicle morphogenesis"/>
    <property type="evidence" value="ECO:0007669"/>
    <property type="project" value="Ensembl"/>
</dbReference>
<dbReference type="GO" id="GO:0070828">
    <property type="term" value="P:heterochromatin organization"/>
    <property type="evidence" value="ECO:0000250"/>
    <property type="project" value="UniProtKB"/>
</dbReference>
<dbReference type="GO" id="GO:0060972">
    <property type="term" value="P:left/right pattern formation"/>
    <property type="evidence" value="ECO:0007669"/>
    <property type="project" value="Ensembl"/>
</dbReference>
<dbReference type="GO" id="GO:0001707">
    <property type="term" value="P:mesoderm formation"/>
    <property type="evidence" value="ECO:0000250"/>
    <property type="project" value="UniProtKB"/>
</dbReference>
<dbReference type="GO" id="GO:0060806">
    <property type="term" value="P:negative regulation of cell differentiation involved in embryonic placenta development"/>
    <property type="evidence" value="ECO:0007669"/>
    <property type="project" value="Ensembl"/>
</dbReference>
<dbReference type="GO" id="GO:0043518">
    <property type="term" value="P:negative regulation of DNA damage response, signal transduction by p53 class mediator"/>
    <property type="evidence" value="ECO:0000315"/>
    <property type="project" value="BHF-UCL"/>
</dbReference>
<dbReference type="GO" id="GO:1902230">
    <property type="term" value="P:negative regulation of intrinsic apoptotic signaling pathway in response to DNA damage"/>
    <property type="evidence" value="ECO:0000315"/>
    <property type="project" value="BHF-UCL"/>
</dbReference>
<dbReference type="GO" id="GO:0000122">
    <property type="term" value="P:negative regulation of transcription by RNA polymerase II"/>
    <property type="evidence" value="ECO:0000314"/>
    <property type="project" value="BHF-UCL"/>
</dbReference>
<dbReference type="GO" id="GO:0010957">
    <property type="term" value="P:negative regulation of vitamin D biosynthetic process"/>
    <property type="evidence" value="ECO:0000314"/>
    <property type="project" value="BHF-UCL"/>
</dbReference>
<dbReference type="GO" id="GO:0007219">
    <property type="term" value="P:Notch signaling pathway"/>
    <property type="evidence" value="ECO:0000250"/>
    <property type="project" value="BHF-UCL"/>
</dbReference>
<dbReference type="GO" id="GO:0001649">
    <property type="term" value="P:osteoblast differentiation"/>
    <property type="evidence" value="ECO:0000270"/>
    <property type="project" value="UniProtKB"/>
</dbReference>
<dbReference type="GO" id="GO:0030335">
    <property type="term" value="P:positive regulation of cell migration"/>
    <property type="evidence" value="ECO:0000315"/>
    <property type="project" value="UniProtKB"/>
</dbReference>
<dbReference type="GO" id="GO:0045893">
    <property type="term" value="P:positive regulation of DNA-templated transcription"/>
    <property type="evidence" value="ECO:0000315"/>
    <property type="project" value="UniProtKB"/>
</dbReference>
<dbReference type="GO" id="GO:0010718">
    <property type="term" value="P:positive regulation of epithelial to mesenchymal transition"/>
    <property type="evidence" value="ECO:0000315"/>
    <property type="project" value="UniProtKB"/>
</dbReference>
<dbReference type="GO" id="GO:2000810">
    <property type="term" value="P:regulation of bicellular tight junction assembly"/>
    <property type="evidence" value="ECO:0000315"/>
    <property type="project" value="BHF-UCL"/>
</dbReference>
<dbReference type="GO" id="GO:0006355">
    <property type="term" value="P:regulation of DNA-templated transcription"/>
    <property type="evidence" value="ECO:0000318"/>
    <property type="project" value="GO_Central"/>
</dbReference>
<dbReference type="GO" id="GO:0060021">
    <property type="term" value="P:roof of mouth development"/>
    <property type="evidence" value="ECO:0007669"/>
    <property type="project" value="Ensembl"/>
</dbReference>
<dbReference type="GO" id="GO:0060707">
    <property type="term" value="P:trophoblast giant cell differentiation"/>
    <property type="evidence" value="ECO:0007669"/>
    <property type="project" value="Ensembl"/>
</dbReference>
<dbReference type="FunFam" id="3.30.160.60:FF:000085">
    <property type="entry name" value="Snail zinc finger protein"/>
    <property type="match status" value="1"/>
</dbReference>
<dbReference type="FunFam" id="3.30.160.60:FF:000942">
    <property type="entry name" value="Snail zinc finger protein"/>
    <property type="match status" value="1"/>
</dbReference>
<dbReference type="FunFam" id="3.30.160.60:FF:000207">
    <property type="entry name" value="zinc finger protein SNAI2"/>
    <property type="match status" value="1"/>
</dbReference>
<dbReference type="Gene3D" id="3.30.160.60">
    <property type="entry name" value="Classic Zinc Finger"/>
    <property type="match status" value="4"/>
</dbReference>
<dbReference type="IDEAL" id="IID00363"/>
<dbReference type="InterPro" id="IPR050527">
    <property type="entry name" value="Snail/Krueppel_Znf"/>
</dbReference>
<dbReference type="InterPro" id="IPR036236">
    <property type="entry name" value="Znf_C2H2_sf"/>
</dbReference>
<dbReference type="InterPro" id="IPR013087">
    <property type="entry name" value="Znf_C2H2_type"/>
</dbReference>
<dbReference type="PANTHER" id="PTHR24388">
    <property type="entry name" value="ZINC FINGER PROTEIN"/>
    <property type="match status" value="1"/>
</dbReference>
<dbReference type="PANTHER" id="PTHR24388:SF37">
    <property type="entry name" value="ZINC FINGER PROTEIN SNAI1"/>
    <property type="match status" value="1"/>
</dbReference>
<dbReference type="Pfam" id="PF00096">
    <property type="entry name" value="zf-C2H2"/>
    <property type="match status" value="2"/>
</dbReference>
<dbReference type="Pfam" id="PF13912">
    <property type="entry name" value="zf-C2H2_6"/>
    <property type="match status" value="1"/>
</dbReference>
<dbReference type="SMART" id="SM00355">
    <property type="entry name" value="ZnF_C2H2"/>
    <property type="match status" value="4"/>
</dbReference>
<dbReference type="SUPFAM" id="SSF57667">
    <property type="entry name" value="beta-beta-alpha zinc fingers"/>
    <property type="match status" value="3"/>
</dbReference>
<dbReference type="PROSITE" id="PS00028">
    <property type="entry name" value="ZINC_FINGER_C2H2_1"/>
    <property type="match status" value="3"/>
</dbReference>
<dbReference type="PROSITE" id="PS50157">
    <property type="entry name" value="ZINC_FINGER_C2H2_2"/>
    <property type="match status" value="4"/>
</dbReference>
<accession>O95863</accession>
<accession>B2R842</accession>
<accession>Q9P113</accession>
<accession>Q9UBP7</accession>
<accession>Q9UHH7</accession>
<evidence type="ECO:0000250" key="1">
    <source>
        <dbReference type="UniProtKB" id="Q02085"/>
    </source>
</evidence>
<evidence type="ECO:0000255" key="2">
    <source>
        <dbReference type="PROSITE-ProRule" id="PRU00042"/>
    </source>
</evidence>
<evidence type="ECO:0000256" key="3">
    <source>
        <dbReference type="SAM" id="MobiDB-lite"/>
    </source>
</evidence>
<evidence type="ECO:0000269" key="4">
    <source>
    </source>
</evidence>
<evidence type="ECO:0000269" key="5">
    <source>
    </source>
</evidence>
<evidence type="ECO:0000269" key="6">
    <source>
    </source>
</evidence>
<evidence type="ECO:0000269" key="7">
    <source>
    </source>
</evidence>
<evidence type="ECO:0000269" key="8">
    <source>
    </source>
</evidence>
<evidence type="ECO:0000269" key="9">
    <source>
    </source>
</evidence>
<evidence type="ECO:0000269" key="10">
    <source>
    </source>
</evidence>
<evidence type="ECO:0000269" key="11">
    <source>
    </source>
</evidence>
<evidence type="ECO:0000269" key="12">
    <source>
    </source>
</evidence>
<evidence type="ECO:0000269" key="13">
    <source>
    </source>
</evidence>
<evidence type="ECO:0000269" key="14">
    <source>
    </source>
</evidence>
<evidence type="ECO:0000269" key="15">
    <source>
    </source>
</evidence>
<evidence type="ECO:0000269" key="16">
    <source>
    </source>
</evidence>
<evidence type="ECO:0000269" key="17">
    <source>
    </source>
</evidence>
<evidence type="ECO:0000269" key="18">
    <source>
    </source>
</evidence>
<evidence type="ECO:0000269" key="19">
    <source>
    </source>
</evidence>
<evidence type="ECO:0000269" key="20">
    <source>
    </source>
</evidence>
<evidence type="ECO:0000269" key="21">
    <source>
    </source>
</evidence>
<evidence type="ECO:0000269" key="22">
    <source>
    </source>
</evidence>
<evidence type="ECO:0000269" key="23">
    <source>
    </source>
</evidence>
<evidence type="ECO:0000269" key="24">
    <source>
    </source>
</evidence>
<evidence type="ECO:0000269" key="25">
    <source>
    </source>
</evidence>
<evidence type="ECO:0000269" key="26">
    <source>
    </source>
</evidence>
<evidence type="ECO:0000269" key="27">
    <source>
    </source>
</evidence>
<evidence type="ECO:0000269" key="28">
    <source>
    </source>
</evidence>
<evidence type="ECO:0000269" key="29">
    <source>
    </source>
</evidence>
<evidence type="ECO:0000269" key="30">
    <source>
    </source>
</evidence>
<evidence type="ECO:0000269" key="31">
    <source>
    </source>
</evidence>
<evidence type="ECO:0000269" key="32">
    <source>
    </source>
</evidence>
<evidence type="ECO:0000305" key="33"/>
<evidence type="ECO:0000305" key="34">
    <source>
    </source>
</evidence>
<evidence type="ECO:0000305" key="35">
    <source>
    </source>
</evidence>
<evidence type="ECO:0000305" key="36">
    <source>
    </source>
</evidence>
<evidence type="ECO:0000305" key="37">
    <source>
    </source>
</evidence>
<evidence type="ECO:0007744" key="38">
    <source>
        <dbReference type="PDB" id="2Y48"/>
    </source>
</evidence>
<evidence type="ECO:0007829" key="39">
    <source>
        <dbReference type="PDB" id="2Y48"/>
    </source>
</evidence>
<evidence type="ECO:0007829" key="40">
    <source>
        <dbReference type="PDB" id="3W5K"/>
    </source>
</evidence>
<feature type="chain" id="PRO_0000047029" description="Zinc finger protein SNAI1">
    <location>
        <begin position="1"/>
        <end position="264"/>
    </location>
</feature>
<feature type="zinc finger region" description="C2H2-type 1" evidence="2">
    <location>
        <begin position="154"/>
        <end position="176"/>
    </location>
</feature>
<feature type="zinc finger region" description="C2H2-type 2" evidence="2">
    <location>
        <begin position="178"/>
        <end position="202"/>
    </location>
</feature>
<feature type="zinc finger region" description="C2H2-type 3" evidence="2">
    <location>
        <begin position="208"/>
        <end position="230"/>
    </location>
</feature>
<feature type="zinc finger region" description="C2H2-type 4; atypical" evidence="2">
    <location>
        <begin position="236"/>
        <end position="259"/>
    </location>
</feature>
<feature type="region of interest" description="Disordered" evidence="3">
    <location>
        <begin position="1"/>
        <end position="27"/>
    </location>
</feature>
<feature type="region of interest" description="SNAG domain" evidence="35 36">
    <location>
        <begin position="1"/>
        <end position="20"/>
    </location>
</feature>
<feature type="region of interest" description="Required and sufficient for interaction with KDM1A" evidence="18 26">
    <location>
        <begin position="2"/>
        <end position="7"/>
    </location>
</feature>
<feature type="region of interest" description="LATS2 binding">
    <location>
        <begin position="10"/>
        <end position="40"/>
    </location>
</feature>
<feature type="region of interest" description="Disordered" evidence="3">
    <location>
        <begin position="86"/>
        <end position="115"/>
    </location>
</feature>
<feature type="region of interest" description="Required for FBXL14-triggered degradation">
    <location>
        <begin position="120"/>
        <end position="151"/>
    </location>
</feature>
<feature type="region of interest" description="Required for nuclear localization and interaction with KPNB1, NOTCH1 and PARP1" evidence="23 25">
    <location>
        <begin position="151"/>
        <end position="264"/>
    </location>
</feature>
<feature type="short sequence motif" description="Destruction motif">
    <location>
        <begin position="95"/>
        <end position="100"/>
    </location>
</feature>
<feature type="modified residue" description="Phosphoserine; by PKA" evidence="13">
    <location>
        <position position="11"/>
    </location>
</feature>
<feature type="modified residue" description="Phosphoserine" evidence="13">
    <location>
        <position position="82"/>
    </location>
</feature>
<feature type="modified residue" description="Phosphoserine; by CK2" evidence="13">
    <location>
        <position position="92"/>
    </location>
</feature>
<feature type="modified residue" description="Phosphoserine" evidence="16 34">
    <location>
        <position position="96"/>
    </location>
</feature>
<feature type="modified residue" description="Phosphoserine" evidence="34">
    <location>
        <position position="100"/>
    </location>
</feature>
<feature type="modified residue" description="Phosphoserine" evidence="7 13 34">
    <location>
        <position position="104"/>
    </location>
</feature>
<feature type="modified residue" description="Phosphoserine" evidence="7 13 34">
    <location>
        <position position="107"/>
    </location>
</feature>
<feature type="modified residue" description="Phosphoserine" evidence="34">
    <location>
        <position position="111"/>
    </location>
</feature>
<feature type="modified residue" description="Phosphoserine" evidence="34">
    <location>
        <position position="115"/>
    </location>
</feature>
<feature type="modified residue" description="Phosphoserine" evidence="34">
    <location>
        <position position="119"/>
    </location>
</feature>
<feature type="modified residue" description="Phosphothreonine; by LATS2" evidence="24">
    <location>
        <position position="203"/>
    </location>
</feature>
<feature type="modified residue" description="Phosphoserine; by PAK1" evidence="8">
    <location>
        <position position="246"/>
    </location>
</feature>
<feature type="glycosylation site" description="O-linked (GlcNAc) serine" evidence="20">
    <location>
        <position position="112"/>
    </location>
</feature>
<feature type="cross-link" description="Glycyl lysine isopeptide (Lys-Gly) (interchain with G-Cter in ubiquitin)">
    <location>
        <position position="98"/>
    </location>
</feature>
<feature type="cross-link" description="Glycyl lysine isopeptide (Lys-Gly) (interchain with G-Cter in ubiquitin)">
    <location>
        <position position="137"/>
    </location>
</feature>
<feature type="cross-link" description="Glycyl lysine isopeptide (Lys-Gly) (interchain with G-Cter in ubiquitin)">
    <location>
        <position position="146"/>
    </location>
</feature>
<feature type="sequence variant" id="VAR_069162" description="In dbSNP:rs34261470.">
    <original>A</original>
    <variation>V</variation>
    <location>
        <position position="66"/>
    </location>
</feature>
<feature type="sequence variant" id="VAR_019969" description="In dbSNP:rs4647958." evidence="5">
    <original>V</original>
    <variation>A</variation>
    <location>
        <position position="118"/>
    </location>
</feature>
<feature type="mutagenesis site" description="Abolishes repressor activity on E-cadherin/CDH1 promoter and binding to KDM1A." evidence="18 19">
    <original>P</original>
    <variation>A</variation>
    <location>
        <position position="2"/>
    </location>
</feature>
<feature type="mutagenesis site" description="Loss of interaction with KDM1A." evidence="18">
    <original>R</original>
    <variation>A</variation>
    <location>
        <position position="3"/>
    </location>
</feature>
<feature type="mutagenesis site" description="Loss of interaction with KDM1A." evidence="18">
    <original>S</original>
    <variation>A</variation>
    <location>
        <position position="4"/>
    </location>
</feature>
<feature type="mutagenesis site" description="Loss of interaction with KDM1A." evidence="18">
    <original>F</original>
    <variation>A</variation>
    <location>
        <position position="5"/>
    </location>
</feature>
<feature type="mutagenesis site" description="Loss of interaction with KDM1A." evidence="18">
    <original>R</original>
    <variation>A</variation>
    <location>
        <position position="8"/>
    </location>
</feature>
<feature type="mutagenesis site" description="Loss of interaction with KDM1A." evidence="18">
    <original>K</original>
    <variation>A</variation>
    <location>
        <position position="9"/>
    </location>
</feature>
<feature type="mutagenesis site" description="Does not affect E-cadherin/CDH1 repression; when associated with R-16." evidence="10">
    <original>K</original>
    <variation>R</variation>
    <location>
        <position position="9"/>
    </location>
</feature>
<feature type="mutagenesis site" description="Abolishes PKA phosphorylation. Strongly decreases repressor activity on E-cadherin/CDH1 and CLDN1 promoters. Increases protein stability. Affects function in EMT." evidence="13">
    <original>S</original>
    <variation>A</variation>
    <location>
        <position position="11"/>
    </location>
</feature>
<feature type="mutagenesis site" description="Does not affect E-cadherin repression; when associated with R-9." evidence="10">
    <original>K</original>
    <variation>R</variation>
    <location>
        <position position="16"/>
    </location>
</feature>
<feature type="mutagenesis site" description="Abolishes CK2 phosphorylation. Strongly decreases repressor activity on E-cadherin/CDH1 and CLDN1 promoters. Increases protein stability. Affects function in cell survival. Abolishes phosphorylation in the serine-rich region; when associated with A-104 and A-107." evidence="13">
    <original>S</original>
    <variation>A</variation>
    <location>
        <position position="92"/>
    </location>
</feature>
<feature type="mutagenesis site" description="Does not affect repressor activity on E-cadherin/CDH1 promoter." evidence="13">
    <original>S</original>
    <variation>E</variation>
    <location>
        <position position="92"/>
    </location>
</feature>
<feature type="mutagenesis site" description="Abolishes recognition and ubiquitination by BTRC which increases steady state level and half-life. Preferentially localizes to the nucleus. Induces a more aggressive tissue invasion program. Lower sensitivity to BTRC-triggered degradation, impairs phosphorylation by GSK3B and does not affect NOTCH1-induced degradation; when associated with A-100. Lower sensitivity to BTRC-triggered degradation, impaired phosphorylation by GSK3B and loss of cytoplasmic localization; when associated with A-100; A-107; A-111; A-115 and A-119." evidence="6 7 16 25 29 31">
    <original>S</original>
    <variation>A</variation>
    <location>
        <position position="96"/>
    </location>
</feature>
<feature type="mutagenesis site" description="No change. Complete loss of sensitivity to FBXL14- and BTRC-triggered degradation and loss of ability to repress E-cadherin/CDH1; when associated with R-137 and R-146." evidence="10 14">
    <original>K</original>
    <variation>R</variation>
    <location>
        <position position="98"/>
    </location>
</feature>
<feature type="mutagenesis site" description="Lower sensitivity to BTRC-triggered degradation and impaired phosphorylation by GSK3B; when associated with A-96. Lower sensitivity to BTRC-triggered degradation, impaired phosphorylation by GSK3B and loss of cytoplasmic localization; when associated with A-96; A-107; A-111; A-115 and A-119. Does not affect NOTCH1-induced degradation; when associated with A-96. Abolishes phosphorylation at S-96." evidence="6 16 25 29 31">
    <original>S</original>
    <variation>A</variation>
    <location>
        <position position="100"/>
    </location>
</feature>
<feature type="mutagenesis site" description="Increases protein stability, does not affect repressor activity on E-cadherin/CDH1 promoter, preferentially localizes to the nucleus, induces a more aggressive tissue invasion program and impairs phosphorylation by GSK3B, binding to BTRC and ubiquitination; when associated with A-107. Impairs phosphorylation in the serine-rich domain/region; when associated with A-92 and A-107. Abolishes phosphorylation at S-96." evidence="7 13 16">
    <original>S</original>
    <variation>A</variation>
    <location>
        <position position="104"/>
    </location>
</feature>
<feature type="mutagenesis site" description="Lower sensitivity to BTRC-triggered degradation, impaired phosphorylation by GSK3B and loss of cytoplasmic localization; when associated with A-111; A-115 and A-119. Lower sensitivity to BTRC-triggered degradation, impaired phosphorylation by GSK3B and loss of cytoplasmic localization; when associated with A-96; A-100; A-111; A-115 and A-119. Increases protein stability, does not affect repressor activity on E-cadherin promoter, preferentially localizes to the nucleus, induces a more aggressive tissue invasion program and impairs phosphorylation by GSK3B, binding to BTRC and ubiquitination; when associated with A-104. Impairs phosphorylation in the serine-rich region; when associated with A-92 and A-104. Abolishes phosphorylation at S-96." evidence="6 7 13 16 29 31">
    <original>S</original>
    <variation>A</variation>
    <location>
        <position position="107"/>
    </location>
</feature>
<feature type="mutagenesis site" description="Predominantly localized to the cytoplasm; when associated with E-111; E-115 and E-119." evidence="6 7 13 16">
    <original>S</original>
    <variation>E</variation>
    <location>
        <position position="107"/>
    </location>
</feature>
<feature type="mutagenesis site" description="Lower sensitivity to BTRC-triggered degradation, impaired phosphorylation by GSK3B and loss of cytoplasmic localization; when associated with A-107; A-115 and A-119. Lower sensitivity to BTRC-triggered degradation, impaired phosphorylation by GSK3B and loss of cytoplasmic localization; when associated with A-96; A-100; A-107; A-115 and A-119." evidence="6 29 31">
    <original>S</original>
    <variation>A</variation>
    <location>
        <position position="111"/>
    </location>
</feature>
<feature type="mutagenesis site" description="Predominantly localized to the cytoplasm; when associated with E-107; E-115 and E-119." evidence="6">
    <original>S</original>
    <variation>E</variation>
    <location>
        <position position="111"/>
    </location>
</feature>
<feature type="mutagenesis site" description="Lower sensitivity to BTRC-triggered degradation, impaired phosphorylation by GSK3B and loss of cytoplasmic localization; when associated with A-107; A-111 and A-119. Lower sensitivity to BTRC-triggered degradation, impaired phosphorylation by GSK3B and loss of cytoplasmic localization; when associated with A-96; A-100; A-107; A-111 and A-119." evidence="6 29 31">
    <original>S</original>
    <variation>A</variation>
    <location>
        <position position="115"/>
    </location>
</feature>
<feature type="mutagenesis site" description="Predominantly localized to the cytoplasm; when associated with E-107; E-111 and E-119." evidence="6">
    <original>S</original>
    <variation>E</variation>
    <location>
        <position position="115"/>
    </location>
</feature>
<feature type="mutagenesis site" description="Lower sensitivity to BTRC-triggered degradation, impaired phosphorylation by GSK3B and loss of cytoplasmic localization; when associated with A-107; A-111 and A-119. Lower sensitivity to BTRC-triggered degradation, impaired phosphorylation by GSK3B and loss of cytoplasmic localization; when associated with A-96; A-100; A-107; A-111 and A-115." evidence="6">
    <original>S</original>
    <variation>A</variation>
    <location>
        <position position="119"/>
    </location>
</feature>
<feature type="mutagenesis site" description="Predominantly localized to the cytoplasm; when associated with E-107; E-111 and E-115." evidence="6 29 31">
    <original>S</original>
    <variation>E</variation>
    <location>
        <position position="119"/>
    </location>
</feature>
<feature type="mutagenesis site" description="Lower sensitivity to FBXL14-triggered degradation. Lower sensitivity to FBXL14-triggered degradation; when associated with R-146. Complete loss of sensitivity to FBXL14- and BTRC-triggered degradation and loss of ability to repress E-cadherin; when associated with R-98 and R-146." evidence="10 14">
    <original>K</original>
    <variation>R</variation>
    <location>
        <position position="137"/>
    </location>
</feature>
<feature type="mutagenesis site" description="Lower sensitivity to FBXL14-triggered degradation. Lower sensitivity to FBXL14-triggered degradation; when associated with R-137. Complete loss of sensitivity to FBXL14- and BTRC-triggered degradation; when associated with R-98 and R-137." evidence="14">
    <original>K</original>
    <variation>R</variation>
    <location>
        <position position="146"/>
    </location>
</feature>
<feature type="mutagenesis site" description="Does not affect binding to KPNB1, KPNA2, IPO7 or TNPO1." evidence="12">
    <original>RK</original>
    <variation>EE</variation>
    <location>
        <begin position="151"/>
        <end position="152"/>
    </location>
</feature>
<feature type="mutagenesis site" description="Abolishes binding to KPNB1, KPNA2, IPO7 and TNPO1 and nuclear localization." evidence="12">
    <original>C</original>
    <variation>A</variation>
    <location>
        <position position="156"/>
    </location>
</feature>
<feature type="mutagenesis site" description="Does not affect binding to KPNB1, KPNA2, IPO7 or TNPO1. No change in subcellular localization. Impairs binding to KPNB1, KPNA2, IPO7 and TNPO1 and abolishes nuclear localization, DNA binding and repressor activity on E-cadherin/CDH1 promoter; when associated with E-170. Abolishes binding to KPNB1, KPNA2, IPO7 and TNPO1 and nuclear localization; when associated with E-187 and/or E-220." evidence="12">
    <original>K</original>
    <variation>E</variation>
    <location>
        <position position="161"/>
    </location>
</feature>
<feature type="mutagenesis site" description="Does not affect binding to KPNB1, KPNA2, IPO7 or TNPO1. No change in subcellular localization. Impairs binding to KPNB1, KPNA2, IPO7 and TNPO1 and abolishes nuclear localization, DNA binding and repressor activity on E-cadherin/CDH1 promoter; when associated with E-161." evidence="12">
    <original>K</original>
    <variation>E</variation>
    <location>
        <position position="170"/>
    </location>
</feature>
<feature type="mutagenesis site" description="Impairs binding to KPNB1, IPO7 and TNPO1 and abolishes binding to KPNA2. Localizes to cytoplasm and nucleus." evidence="12">
    <original>C</original>
    <variation>A</variation>
    <location>
        <position position="182"/>
    </location>
</feature>
<feature type="mutagenesis site" description="Does not affect binding to KPNB1, KPNA2, IPO7 or TNPO1. Impairs binding to KPNB1, KPNA2, IPO7 and TNPO1 and abolishes nuclear localization, DNA binding and repressor activity on E-cadherin/CDH1 promoter; when associated with E-191. Abolishes binding to KPNB1, KPNA2, IPO7 and TNPO1 and nuclear localization; when associated with E-161 and/or E-220." evidence="12">
    <original>K</original>
    <variation>E</variation>
    <location>
        <position position="187"/>
    </location>
</feature>
<feature type="mutagenesis site" description="Mildly reduces binding to KPNB1 and nuclear import. Does not affect binding to KPNA2, IPO7 or TNPO1. Strongly reduces binding to KPNB1 and nuclear import; when associated with A-193. Loss of binding to KPNB1 and nuclear import; when associated with A-193 and A-196." evidence="12 28">
    <original>R</original>
    <variation>E</variation>
    <location>
        <position position="191"/>
    </location>
</feature>
<feature type="mutagenesis site" description="Mildly reduces binding to KPNB1 and nuclear import. Strongly reduces binding to KPNB1 and nuclear import; when associated with E-191. Loss of binding to KPNB1 and nuclear import; when associated with E-191 and A-196." evidence="28">
    <original>W</original>
    <variation>A</variation>
    <location>
        <position position="193"/>
    </location>
</feature>
<feature type="mutagenesis site" description="Loss of binding to KPNB1 and nuclear import; when associated with E-191 and A-193." evidence="28">
    <original>Q</original>
    <variation>A</variation>
    <location>
        <position position="196"/>
    </location>
</feature>
<feature type="mutagenesis site" description="Abolishes LATS2 phosphorylation. Does not affect binding to LATS2. Reduces protein stability. Equally distributed between nucleus and cytoplasm. Increases capacity to associate with nuclear pore importins. Unable to accumulate in the nucleus. Does not abrogate function." evidence="24">
    <original>T</original>
    <variation>A</variation>
    <location>
        <position position="203"/>
    </location>
</feature>
<feature type="mutagenesis site" description="Exclusively localizes to the cytoplasm. Reduces capacity to associate with nuclear pore importins. Unable to enter the nucleus. Does not abrogate function." evidence="24">
    <original>T</original>
    <variation>E</variation>
    <location>
        <position position="203"/>
    </location>
</feature>
<feature type="mutagenesis site" description="Impairs binding to KPNB1, IPO7 and TNPO1 and abolishes binding to KPNA2. Localizes to cytoplasm and nucleus." evidence="12">
    <original>C</original>
    <variation>A</variation>
    <location>
        <position position="210"/>
    </location>
</feature>
<feature type="mutagenesis site" description="Impairs binding to KPNB1, KPNA2, IPO7 and TNPO1. No change in subcellular localization." evidence="12">
    <original>R</original>
    <variation>E</variation>
    <location>
        <position position="215"/>
    </location>
</feature>
<feature type="mutagenesis site" description="Does not affect binding to KPNB1, KPNA2, IPO7 or TNPO1. No change in subcellular localization. Impairs binding to KPNB1, KPNA2, IPO7 and TNPO1; when associated with E-222 and E-224. Impairs binding to KPNB1, KPNA2, IPO7 and TNPO1 and abolishes nuclear localization, DNA binding and repressor activity on E-cadherin/CDH1 promoter; when associated with E-224. Abolishes binding to KPNB1, KPNA2, IPO7 and TNPO1 and nuclear localization; when associated with E-161 and/or E-187." evidence="12">
    <original>R</original>
    <variation>E</variation>
    <location>
        <position position="220"/>
    </location>
</feature>
<feature type="mutagenesis site" description="Does not affect binding to KPNB1, KPNA2, IPO7 or TNPO1. No change in subcellular localization. Impairs binding to KPNB1, KPNA2, IPO7 and TNPO1; when associated with E-220 and E-224." evidence="12">
    <original>N</original>
    <variation>E</variation>
    <location>
        <position position="222"/>
    </location>
</feature>
<feature type="mutagenesis site" description="Does not affect binding to KPNB1, KPNA2, IPO7 or TNPO1. No change in subcellular localization. Impairs binding to KPNB1, KPNA2, IPO7 and TNPO1; when associated with E-220 and E-222. Impairs binding to KPNB1, KPNA2, IPO7 and TNPO1 and abolishes nuclear localization, DNA binding and repressor activity on E-cadherin/CDH1 promoter; when associated with E-220. Strongly reduces binding to KPNB1 and nuclear import; when associated with A-228." evidence="12 28">
    <original>R</original>
    <variation>E</variation>
    <location>
        <position position="224"/>
    </location>
</feature>
<feature type="mutagenesis site" description="Very minor effect on binding to KPNB1 and nuclear import. Strongly reduces binding to KPNB1 and nuclear import; when associated with E-224." evidence="28">
    <original>Q</original>
    <variation>A</variation>
    <location>
        <position position="228"/>
    </location>
</feature>
<feature type="mutagenesis site" description="Does not affect binding to KPNB1, KPNA2, IPO7 or TNPO1." evidence="12">
    <original>DVKK</original>
    <variation>KVEE</variation>
    <location>
        <begin position="232"/>
        <end position="235"/>
    </location>
</feature>
<feature type="mutagenesis site" description="Impairs binding to KPNB1 and IPO7 and abolishes binding to KPNA2 and TNPO1 and nuclear localization." evidence="12">
    <original>C</original>
    <variation>A</variation>
    <location>
        <position position="238"/>
    </location>
</feature>
<feature type="mutagenesis site" description="Does not affect binding to KPNB1, KPNA2, IPO7, TNPO1 or DNA." evidence="12">
    <original>Q</original>
    <variation>E</variation>
    <location>
        <position position="239"/>
    </location>
</feature>
<feature type="mutagenesis site" description="Decreases repression activity on E-cadherin/CDH1, occludin and aromatase promoters. Preferentially localizes to the cytoplasm. Abolishes phosphorylation by PAK1." evidence="8">
    <original>S</original>
    <variation>A</variation>
    <location>
        <position position="246"/>
    </location>
</feature>
<feature type="mutagenesis site" description="Mildly reduces binding to KPNB1 and nuclear import." evidence="28">
    <original>R</original>
    <variation>E</variation>
    <location>
        <position position="247"/>
    </location>
</feature>
<feature type="sequence conflict" description="In Ref. 4; BAG36039." evidence="33" ref="4">
    <original>P</original>
    <variation>L</variation>
    <location>
        <position position="46"/>
    </location>
</feature>
<feature type="sequence conflict" description="In Ref. 7; AAF32527." evidence="33" ref="7">
    <original>F</original>
    <variation>S</variation>
    <location>
        <position position="154"/>
    </location>
</feature>
<feature type="helix" evidence="39">
    <location>
        <begin position="3"/>
        <end position="5"/>
    </location>
</feature>
<feature type="turn" evidence="40">
    <location>
        <begin position="157"/>
        <end position="159"/>
    </location>
</feature>
<feature type="strand" evidence="40">
    <location>
        <begin position="163"/>
        <end position="165"/>
    </location>
</feature>
<feature type="helix" evidence="40">
    <location>
        <begin position="166"/>
        <end position="173"/>
    </location>
</feature>
<feature type="helix" evidence="40">
    <location>
        <begin position="174"/>
        <end position="176"/>
    </location>
</feature>
<feature type="strand" evidence="40">
    <location>
        <begin position="183"/>
        <end position="185"/>
    </location>
</feature>
<feature type="strand" evidence="40">
    <location>
        <begin position="188"/>
        <end position="191"/>
    </location>
</feature>
<feature type="helix" evidence="40">
    <location>
        <begin position="192"/>
        <end position="200"/>
    </location>
</feature>
<feature type="turn" evidence="40">
    <location>
        <begin position="211"/>
        <end position="213"/>
    </location>
</feature>
<feature type="strand" evidence="40">
    <location>
        <begin position="216"/>
        <end position="219"/>
    </location>
</feature>
<feature type="helix" evidence="40">
    <location>
        <begin position="220"/>
        <end position="227"/>
    </location>
</feature>
<feature type="turn" evidence="40">
    <location>
        <begin position="239"/>
        <end position="241"/>
    </location>
</feature>
<feature type="strand" evidence="40">
    <location>
        <begin position="244"/>
        <end position="247"/>
    </location>
</feature>
<feature type="helix" evidence="40">
    <location>
        <begin position="248"/>
        <end position="256"/>
    </location>
</feature>
<proteinExistence type="evidence at protein level"/>
<name>SNAI1_HUMAN</name>
<sequence>MPRSFLVRKPSDPNRKPNYSELQDSNPEFTFQQPYDQAHLLAAIPPPEILNPTASLPMLIWDSVLAPQAQPIAWASLRLQESPRVAELTSLSDEDSGKGSQPPSPPSPAPSSFSSTSVSSLEAEAYAAFPGLGQVPKQLAQLSEAKDLQARKAFNCKYCNKEYLSLGALKMHIRSHTLPCVCGTCGKAFSRPWLLQGHVRTHTGEKPFSCPHCSRAFADRSNLRAHLQTHSDVKKYQCQACARTFSRMSLLHKHQESGCSGCPR</sequence>
<reference key="1">
    <citation type="journal article" date="2001" name="Cancer Res.">
        <title>Down-regulation of promoter 1.3 activity of the human aromatase gene in breast tissue by zinc-finger protein, snail (SnaH).</title>
        <authorList>
            <person name="Okubo T."/>
            <person name="Truong T.K."/>
            <person name="Yu B."/>
            <person name="Itoh T."/>
            <person name="Zhao J."/>
            <person name="Grube B."/>
            <person name="Zhou D."/>
            <person name="Chen S."/>
        </authorList>
    </citation>
    <scope>NUCLEOTIDE SEQUENCE [MRNA]</scope>
    <scope>VARIANT ALA-118</scope>
    <source>
        <tissue>Mammary gland</tissue>
    </source>
</reference>
<reference key="2">
    <citation type="journal article" date="1999" name="Hum. Genet.">
        <title>Characterisation of the human snail (SNAI1) gene and exclusion as a major disease gene in craniosynostosis.</title>
        <authorList>
            <person name="Twigg S.R."/>
            <person name="Wilkie A.O.M."/>
        </authorList>
    </citation>
    <scope>NUCLEOTIDE SEQUENCE [GENOMIC DNA]</scope>
</reference>
<reference key="3">
    <citation type="journal article" date="1999" name="Genomics">
        <title>Genomic organization, expression, and chromosome location of the human SNAIL gene (SNAI1) and a related processed pseudogene (SNAI1P).</title>
        <authorList>
            <person name="Paznekas W.A."/>
            <person name="Okajima K."/>
            <person name="Schertzer M."/>
            <person name="Wood S."/>
            <person name="Jabs E.W."/>
        </authorList>
    </citation>
    <scope>NUCLEOTIDE SEQUENCE [GENOMIC DNA]</scope>
</reference>
<reference key="4">
    <citation type="journal article" date="2004" name="Nat. Genet.">
        <title>Complete sequencing and characterization of 21,243 full-length human cDNAs.</title>
        <authorList>
            <person name="Ota T."/>
            <person name="Suzuki Y."/>
            <person name="Nishikawa T."/>
            <person name="Otsuki T."/>
            <person name="Sugiyama T."/>
            <person name="Irie R."/>
            <person name="Wakamatsu A."/>
            <person name="Hayashi K."/>
            <person name="Sato H."/>
            <person name="Nagai K."/>
            <person name="Kimura K."/>
            <person name="Makita H."/>
            <person name="Sekine M."/>
            <person name="Obayashi M."/>
            <person name="Nishi T."/>
            <person name="Shibahara T."/>
            <person name="Tanaka T."/>
            <person name="Ishii S."/>
            <person name="Yamamoto J."/>
            <person name="Saito K."/>
            <person name="Kawai Y."/>
            <person name="Isono Y."/>
            <person name="Nakamura Y."/>
            <person name="Nagahari K."/>
            <person name="Murakami K."/>
            <person name="Yasuda T."/>
            <person name="Iwayanagi T."/>
            <person name="Wagatsuma M."/>
            <person name="Shiratori A."/>
            <person name="Sudo H."/>
            <person name="Hosoiri T."/>
            <person name="Kaku Y."/>
            <person name="Kodaira H."/>
            <person name="Kondo H."/>
            <person name="Sugawara M."/>
            <person name="Takahashi M."/>
            <person name="Kanda K."/>
            <person name="Yokoi T."/>
            <person name="Furuya T."/>
            <person name="Kikkawa E."/>
            <person name="Omura Y."/>
            <person name="Abe K."/>
            <person name="Kamihara K."/>
            <person name="Katsuta N."/>
            <person name="Sato K."/>
            <person name="Tanikawa M."/>
            <person name="Yamazaki M."/>
            <person name="Ninomiya K."/>
            <person name="Ishibashi T."/>
            <person name="Yamashita H."/>
            <person name="Murakawa K."/>
            <person name="Fujimori K."/>
            <person name="Tanai H."/>
            <person name="Kimata M."/>
            <person name="Watanabe M."/>
            <person name="Hiraoka S."/>
            <person name="Chiba Y."/>
            <person name="Ishida S."/>
            <person name="Ono Y."/>
            <person name="Takiguchi S."/>
            <person name="Watanabe S."/>
            <person name="Yosida M."/>
            <person name="Hotuta T."/>
            <person name="Kusano J."/>
            <person name="Kanehori K."/>
            <person name="Takahashi-Fujii A."/>
            <person name="Hara H."/>
            <person name="Tanase T.-O."/>
            <person name="Nomura Y."/>
            <person name="Togiya S."/>
            <person name="Komai F."/>
            <person name="Hara R."/>
            <person name="Takeuchi K."/>
            <person name="Arita M."/>
            <person name="Imose N."/>
            <person name="Musashino K."/>
            <person name="Yuuki H."/>
            <person name="Oshima A."/>
            <person name="Sasaki N."/>
            <person name="Aotsuka S."/>
            <person name="Yoshikawa Y."/>
            <person name="Matsunawa H."/>
            <person name="Ichihara T."/>
            <person name="Shiohata N."/>
            <person name="Sano S."/>
            <person name="Moriya S."/>
            <person name="Momiyama H."/>
            <person name="Satoh N."/>
            <person name="Takami S."/>
            <person name="Terashima Y."/>
            <person name="Suzuki O."/>
            <person name="Nakagawa S."/>
            <person name="Senoh A."/>
            <person name="Mizoguchi H."/>
            <person name="Goto Y."/>
            <person name="Shimizu F."/>
            <person name="Wakebe H."/>
            <person name="Hishigaki H."/>
            <person name="Watanabe T."/>
            <person name="Sugiyama A."/>
            <person name="Takemoto M."/>
            <person name="Kawakami B."/>
            <person name="Yamazaki M."/>
            <person name="Watanabe K."/>
            <person name="Kumagai A."/>
            <person name="Itakura S."/>
            <person name="Fukuzumi Y."/>
            <person name="Fujimori Y."/>
            <person name="Komiyama M."/>
            <person name="Tashiro H."/>
            <person name="Tanigami A."/>
            <person name="Fujiwara T."/>
            <person name="Ono T."/>
            <person name="Yamada K."/>
            <person name="Fujii Y."/>
            <person name="Ozaki K."/>
            <person name="Hirao M."/>
            <person name="Ohmori Y."/>
            <person name="Kawabata A."/>
            <person name="Hikiji T."/>
            <person name="Kobatake N."/>
            <person name="Inagaki H."/>
            <person name="Ikema Y."/>
            <person name="Okamoto S."/>
            <person name="Okitani R."/>
            <person name="Kawakami T."/>
            <person name="Noguchi S."/>
            <person name="Itoh T."/>
            <person name="Shigeta K."/>
            <person name="Senba T."/>
            <person name="Matsumura K."/>
            <person name="Nakajima Y."/>
            <person name="Mizuno T."/>
            <person name="Morinaga M."/>
            <person name="Sasaki M."/>
            <person name="Togashi T."/>
            <person name="Oyama M."/>
            <person name="Hata H."/>
            <person name="Watanabe M."/>
            <person name="Komatsu T."/>
            <person name="Mizushima-Sugano J."/>
            <person name="Satoh T."/>
            <person name="Shirai Y."/>
            <person name="Takahashi Y."/>
            <person name="Nakagawa K."/>
            <person name="Okumura K."/>
            <person name="Nagase T."/>
            <person name="Nomura N."/>
            <person name="Kikuchi H."/>
            <person name="Masuho Y."/>
            <person name="Yamashita R."/>
            <person name="Nakai K."/>
            <person name="Yada T."/>
            <person name="Nakamura Y."/>
            <person name="Ohara O."/>
            <person name="Isogai T."/>
            <person name="Sugano S."/>
        </authorList>
    </citation>
    <scope>NUCLEOTIDE SEQUENCE [LARGE SCALE MRNA]</scope>
    <source>
        <tissue>Teratocarcinoma</tissue>
    </source>
</reference>
<reference key="5">
    <citation type="journal article" date="2001" name="Nature">
        <title>The DNA sequence and comparative analysis of human chromosome 20.</title>
        <authorList>
            <person name="Deloukas P."/>
            <person name="Matthews L.H."/>
            <person name="Ashurst J.L."/>
            <person name="Burton J."/>
            <person name="Gilbert J.G.R."/>
            <person name="Jones M."/>
            <person name="Stavrides G."/>
            <person name="Almeida J.P."/>
            <person name="Babbage A.K."/>
            <person name="Bagguley C.L."/>
            <person name="Bailey J."/>
            <person name="Barlow K.F."/>
            <person name="Bates K.N."/>
            <person name="Beard L.M."/>
            <person name="Beare D.M."/>
            <person name="Beasley O.P."/>
            <person name="Bird C.P."/>
            <person name="Blakey S.E."/>
            <person name="Bridgeman A.M."/>
            <person name="Brown A.J."/>
            <person name="Buck D."/>
            <person name="Burrill W.D."/>
            <person name="Butler A.P."/>
            <person name="Carder C."/>
            <person name="Carter N.P."/>
            <person name="Chapman J.C."/>
            <person name="Clamp M."/>
            <person name="Clark G."/>
            <person name="Clark L.N."/>
            <person name="Clark S.Y."/>
            <person name="Clee C.M."/>
            <person name="Clegg S."/>
            <person name="Cobley V.E."/>
            <person name="Collier R.E."/>
            <person name="Connor R.E."/>
            <person name="Corby N.R."/>
            <person name="Coulson A."/>
            <person name="Coville G.J."/>
            <person name="Deadman R."/>
            <person name="Dhami P.D."/>
            <person name="Dunn M."/>
            <person name="Ellington A.G."/>
            <person name="Frankland J.A."/>
            <person name="Fraser A."/>
            <person name="French L."/>
            <person name="Garner P."/>
            <person name="Grafham D.V."/>
            <person name="Griffiths C."/>
            <person name="Griffiths M.N.D."/>
            <person name="Gwilliam R."/>
            <person name="Hall R.E."/>
            <person name="Hammond S."/>
            <person name="Harley J.L."/>
            <person name="Heath P.D."/>
            <person name="Ho S."/>
            <person name="Holden J.L."/>
            <person name="Howden P.J."/>
            <person name="Huckle E."/>
            <person name="Hunt A.R."/>
            <person name="Hunt S.E."/>
            <person name="Jekosch K."/>
            <person name="Johnson C.M."/>
            <person name="Johnson D."/>
            <person name="Kay M.P."/>
            <person name="Kimberley A.M."/>
            <person name="King A."/>
            <person name="Knights A."/>
            <person name="Laird G.K."/>
            <person name="Lawlor S."/>
            <person name="Lehvaeslaiho M.H."/>
            <person name="Leversha M.A."/>
            <person name="Lloyd C."/>
            <person name="Lloyd D.M."/>
            <person name="Lovell J.D."/>
            <person name="Marsh V.L."/>
            <person name="Martin S.L."/>
            <person name="McConnachie L.J."/>
            <person name="McLay K."/>
            <person name="McMurray A.A."/>
            <person name="Milne S.A."/>
            <person name="Mistry D."/>
            <person name="Moore M.J.F."/>
            <person name="Mullikin J.C."/>
            <person name="Nickerson T."/>
            <person name="Oliver K."/>
            <person name="Parker A."/>
            <person name="Patel R."/>
            <person name="Pearce T.A.V."/>
            <person name="Peck A.I."/>
            <person name="Phillimore B.J.C.T."/>
            <person name="Prathalingam S.R."/>
            <person name="Plumb R.W."/>
            <person name="Ramsay H."/>
            <person name="Rice C.M."/>
            <person name="Ross M.T."/>
            <person name="Scott C.E."/>
            <person name="Sehra H.K."/>
            <person name="Shownkeen R."/>
            <person name="Sims S."/>
            <person name="Skuce C.D."/>
            <person name="Smith M.L."/>
            <person name="Soderlund C."/>
            <person name="Steward C.A."/>
            <person name="Sulston J.E."/>
            <person name="Swann R.M."/>
            <person name="Sycamore N."/>
            <person name="Taylor R."/>
            <person name="Tee L."/>
            <person name="Thomas D.W."/>
            <person name="Thorpe A."/>
            <person name="Tracey A."/>
            <person name="Tromans A.C."/>
            <person name="Vaudin M."/>
            <person name="Wall M."/>
            <person name="Wallis J.M."/>
            <person name="Whitehead S.L."/>
            <person name="Whittaker P."/>
            <person name="Willey D.L."/>
            <person name="Williams L."/>
            <person name="Williams S.A."/>
            <person name="Wilming L."/>
            <person name="Wray P.W."/>
            <person name="Hubbard T."/>
            <person name="Durbin R.M."/>
            <person name="Bentley D.R."/>
            <person name="Beck S."/>
            <person name="Rogers J."/>
        </authorList>
    </citation>
    <scope>NUCLEOTIDE SEQUENCE [LARGE SCALE GENOMIC DNA]</scope>
</reference>
<reference key="6">
    <citation type="journal article" date="2004" name="Genome Res.">
        <title>The status, quality, and expansion of the NIH full-length cDNA project: the Mammalian Gene Collection (MGC).</title>
        <authorList>
            <consortium name="The MGC Project Team"/>
        </authorList>
    </citation>
    <scope>NUCLEOTIDE SEQUENCE [LARGE SCALE MRNA]</scope>
    <source>
        <tissue>Testis</tissue>
    </source>
</reference>
<reference key="7">
    <citation type="journal article" date="2000" name="Nat. Cell Biol.">
        <title>The transcription factor Snail is a repressor of E-cadherin gene expression in epithelial tumour cells.</title>
        <authorList>
            <person name="Batlle E."/>
            <person name="Sancho E."/>
            <person name="Franci C."/>
            <person name="Dominguez D."/>
            <person name="Monfar M."/>
            <person name="Baulida J."/>
            <person name="Garcia de Herreros A."/>
        </authorList>
    </citation>
    <scope>NUCLEOTIDE SEQUENCE [MRNA] OF 1-172</scope>
    <scope>FUNCTION</scope>
    <scope>TISSUE SPECIFICITY</scope>
</reference>
<reference key="8">
    <citation type="journal article" date="2004" name="Nat. Cell Biol.">
        <title>Dual regulation of Snail by GSK-3beta-mediated phosphorylation in control of epithelial-mesenchymal transition.</title>
        <authorList>
            <person name="Zhou B.P."/>
            <person name="Deng J."/>
            <person name="Xia W."/>
            <person name="Xu J."/>
            <person name="Li Y.M."/>
            <person name="Gunduz M."/>
            <person name="Hung M.C."/>
        </authorList>
    </citation>
    <scope>PHOSPHORYLATION AT SER-96; SER-100; SER-104; SER-107; SER-111; SER-115 AND SER-119 BY GSK3B</scope>
    <scope>UBIQUITINATION BY BTRC</scope>
    <scope>MUTAGENESIS OF SER-96; SER-100; SER-107; SER-111; SER-115 AND SER-119</scope>
    <scope>SUBCELLULAR LOCATION</scope>
</reference>
<reference key="9">
    <citation type="journal article" date="2005" name="Cancer Res.">
        <title>Pak1 phosphorylation of snail, a master regulator of epithelial-to-mesenchyme transition, modulates snail's subcellular localization and functions.</title>
        <authorList>
            <person name="Yang Z."/>
            <person name="Rayala S."/>
            <person name="Nguyen D."/>
            <person name="Vadlamudi R.K."/>
            <person name="Chen S."/>
            <person name="Kumar R."/>
        </authorList>
    </citation>
    <scope>SUBCELLULAR LOCATION</scope>
    <scope>PHOSPHORYLATION AT SER-246 BY PAK1</scope>
    <scope>MUTAGENESIS OF SER-246</scope>
</reference>
<reference key="10">
    <citation type="journal article" date="2005" name="EMBO J.">
        <title>A molecular role for lysyl oxidase-like 2 enzyme in snail regulation and tumor progression.</title>
        <authorList>
            <person name="Peinado H."/>
            <person name="Del Carmen Iglesias-de la Cruz M."/>
            <person name="Olmeda D."/>
            <person name="Csiszar K."/>
            <person name="Fong K.S."/>
            <person name="Vega S."/>
            <person name="Nieto M.A."/>
            <person name="Cano A."/>
            <person name="Portillo F."/>
        </authorList>
    </citation>
    <scope>FUNCTION</scope>
    <scope>INTERACTION WITH LOXL2 AND LOXL3</scope>
    <scope>MUTAGENESIS OF LYS-9; LYS-16; LYS-98 AND LYS-137</scope>
</reference>
<reference key="11">
    <citation type="journal article" date="2005" name="Genes Cells">
        <title>Zinc finger domain of Snail functions as a nuclear localization signal for importin beta-mediated nuclear import pathway.</title>
        <authorList>
            <person name="Yamasaki H."/>
            <person name="Sekimoto T."/>
            <person name="Ohkubo T."/>
            <person name="Douchi T."/>
            <person name="Nagata Y."/>
            <person name="Ozawa M."/>
            <person name="Yoneda Y."/>
        </authorList>
    </citation>
    <scope>SUBCELLULAR LOCATION</scope>
    <scope>INTERACTION WITH KPNB1</scope>
</reference>
<reference key="12">
    <citation type="journal article" date="2005" name="J. Biol. Chem.">
        <title>Wnt-dependent regulation of the E-cadherin repressor snail.</title>
        <authorList>
            <person name="Yook J.I."/>
            <person name="Li X.Y."/>
            <person name="Ota I."/>
            <person name="Fearon E.R."/>
            <person name="Weiss S.J."/>
        </authorList>
    </citation>
    <scope>FUNCTION</scope>
    <scope>PHOSPHORYLATION AT SER-104 AND SER-107</scope>
    <scope>MUTAGENESIS OF SER-96; SER-104 AND SER-107</scope>
</reference>
<reference key="13">
    <citation type="journal article" date="2008" name="Dev. Cell">
        <title>Ajuba LIM proteins are snail/slug corepressors required for neural crest development in Xenopus.</title>
        <authorList>
            <person name="Langer E.M."/>
            <person name="Feng Y."/>
            <person name="Zhaoyuan H."/>
            <person name="Rauscher F.J. III"/>
            <person name="Kroll K.L."/>
            <person name="Longmore G.D."/>
        </authorList>
    </citation>
    <scope>INTERACTION WITH LIMD1 AND AJUBA</scope>
</reference>
<reference key="14">
    <citation type="journal article" date="2009" name="J. Cell Sci.">
        <title>Characterization of Snail nuclear import pathways as representatives of C2H2 zinc finger transcription factors.</title>
        <authorList>
            <person name="Mingot J.M."/>
            <person name="Vega S."/>
            <person name="Maestro B."/>
            <person name="Sanz J.M."/>
            <person name="Nieto M.A."/>
        </authorList>
    </citation>
    <scope>INTERACTION WITH KPNA2; KPNB1; TNPO1 AND IPO7</scope>
    <scope>MUTAGENESIS OF 151-ARG-LYS-152; CYS-156; LYS-161; LYS-170; CYS-182; LYS-187; ARG-191; CYS-210; ARG-215; ARG-220; ASN-222; ARG-224; 232-ASP--LYS-235; CYS-238 AND GLN-239</scope>
</reference>
<reference key="15">
    <citation type="journal article" date="2010" name="EMBO J.">
        <title>The SNAG domain of Snail1 functions as a molecular hook for recruiting lysine-specific demethylase 1.</title>
        <authorList>
            <person name="Lin Y."/>
            <person name="Wu Y."/>
            <person name="Li J."/>
            <person name="Dong C."/>
            <person name="Ye X."/>
            <person name="Chi Y.I."/>
            <person name="Evers B.M."/>
            <person name="Zhou B.P."/>
        </authorList>
    </citation>
    <scope>FUNCTION</scope>
    <scope>INTERACTION WITH KDM1A</scope>
    <scope>SUBCELLULAR LOCATION</scope>
    <scope>DOMAIN</scope>
    <scope>MUTAGENESIS OF PRO-2; ARG-3; SER-4; PHE-5; ARG-8 AND LYS-9</scope>
</reference>
<reference key="16">
    <citation type="journal article" date="2010" name="EMBO J.">
        <title>Snail1 is stabilized by O-GlcNAc modification in hyperglycaemic condition.</title>
        <authorList>
            <person name="Park S.Y."/>
            <person name="Kim H.S."/>
            <person name="Kim N.H."/>
            <person name="Ji S."/>
            <person name="Cha S.Y."/>
            <person name="Kang J.G."/>
            <person name="Ota I."/>
            <person name="Shimada K."/>
            <person name="Konishi N."/>
            <person name="Nam H.W."/>
            <person name="Hong S.W."/>
            <person name="Yang W.H."/>
            <person name="Roth J."/>
            <person name="Yook J.I."/>
            <person name="Cho J.W."/>
        </authorList>
    </citation>
    <scope>GLYCOSYLATION AT SER-112</scope>
</reference>
<reference key="17">
    <citation type="journal article" date="2010" name="FEBS J.">
        <title>Snail associates with EGR-1 and SP-1 to upregulate transcriptional activation of p15INK4b.</title>
        <authorList>
            <person name="Hu C.T."/>
            <person name="Chang T.Y."/>
            <person name="Cheng C.C."/>
            <person name="Liu C.S."/>
            <person name="Wu J.R."/>
            <person name="Li M.C."/>
            <person name="Wu W.S."/>
        </authorList>
    </citation>
    <scope>FUNCTION</scope>
    <scope>INTERACTION WITH EGR1</scope>
    <scope>INDUCTION</scope>
</reference>
<reference key="18">
    <citation type="journal article" date="2010" name="FEBS Lett.">
        <title>p53 inhibits tumor cell invasion via the degradation of snail protein in hepatocellular carcinoma.</title>
        <authorList>
            <person name="Lim S.O."/>
            <person name="Kim H."/>
            <person name="Jung G."/>
        </authorList>
    </citation>
    <scope>INTERACTION WITH TP53 AND MDM2</scope>
    <scope>UBIQUITINATION BY MDM2</scope>
</reference>
<reference key="19">
    <citation type="journal article" date="2010" name="J. Biol. Chem.">
        <title>The hypoxia-controlled FBXL14 ubiquitin ligase targets SNAIL1 for proteasome degradation.</title>
        <authorList>
            <person name="Vinas-Castells R."/>
            <person name="Beltran M."/>
            <person name="Valls G."/>
            <person name="Gomez I."/>
            <person name="Garcia J.M."/>
            <person name="Montserrat-Sentis B."/>
            <person name="Baulida J."/>
            <person name="Bonilla F."/>
            <person name="de Herreros A.G."/>
            <person name="Diaz V.M."/>
        </authorList>
    </citation>
    <scope>UBIQUITINATION BY FBXL14 AND BTRC</scope>
    <scope>SUBCELLULAR LOCATION</scope>
    <scope>MUTAGENESIS OF LYS-98; LYS-137 AND LYS-146</scope>
</reference>
<reference key="20">
    <citation type="journal article" date="2010" name="Mol. Biol. Cell">
        <title>Phosphorylation of serine 11 and serine 92 as new positive regulators of human Snail1 function: potential involvement of casein kinase-2 and the cAMP-activated kinase protein kinase A.</title>
        <authorList>
            <person name="MacPherson M.R."/>
            <person name="Molina P."/>
            <person name="Souchelnytskyi S."/>
            <person name="Wernstedt C."/>
            <person name="Martin-Perez J."/>
            <person name="Portillo F."/>
            <person name="Cano A."/>
        </authorList>
    </citation>
    <scope>IDENTIFICATION BY MASS SPECTROMETRY</scope>
    <scope>PHOSPHORYLATION AT SER-11; SER-82; SER-92; SER-104 AND SER-107</scope>
    <scope>MUTAGENESIS OF SER-11; SER-92; SER-104 AND SER-107</scope>
</reference>
<reference key="21">
    <citation type="journal article" date="2010" name="Oncogene">
        <title>Role of CK1 in GSK3beta-mediated phosphorylation and degradation of snail.</title>
        <authorList>
            <person name="Xu Y."/>
            <person name="Lee S.H."/>
            <person name="Kim H.S."/>
            <person name="Kim N.H."/>
            <person name="Piao S."/>
            <person name="Park S.H."/>
            <person name="Jung Y.S."/>
            <person name="Yook J.I."/>
            <person name="Park B.J."/>
            <person name="Ha N.C."/>
        </authorList>
    </citation>
    <scope>PHOSPHORYLATION BY CSNK1E AND GSK3B</scope>
    <scope>PHOSPHORYLATION AT SER-96</scope>
    <scope>MUTAGENESIS OF SER-96; SER-100; SER-104 AND SER-107</scope>
</reference>
<reference key="22">
    <citation type="journal article" date="2010" name="Oncogene">
        <title>Requirement of the histone demethylase LSD1 in Snai1-mediated transcriptional repression during epithelial-mesenchymal transition.</title>
        <authorList>
            <person name="Lin T."/>
            <person name="Ponn A."/>
            <person name="Hu X."/>
            <person name="Law B.K."/>
            <person name="Lu J."/>
        </authorList>
    </citation>
    <scope>FUNCTION</scope>
    <scope>INTERACTION WITH KDM1A</scope>
    <scope>MUTAGENESIS OF PRO-2</scope>
</reference>
<reference key="23">
    <citation type="journal article" date="2011" name="BMC Biol.">
        <title>Notch1 binds and induces degradation of Snail in hepatocellular carcinoma.</title>
        <authorList>
            <person name="Lim S.O."/>
            <person name="Kim H.S."/>
            <person name="Quan X."/>
            <person name="Ahn S.M."/>
            <person name="Kim H."/>
            <person name="Hsieh D."/>
            <person name="Seong J.K."/>
            <person name="Jung G."/>
        </authorList>
    </citation>
    <scope>IDENTIFICATION BY MASS SPECTROMETRY</scope>
    <scope>INTERACTION WITH NOTCH1 AND MDM2</scope>
    <scope>SUBCELLULAR LOCATION</scope>
    <scope>UBIQUITINATION BY MDM2</scope>
    <scope>MUTAGENESIS OF SER-96 AND SER-100</scope>
</reference>
<reference key="24">
    <citation type="journal article" date="2011" name="J. Biol. Chem.">
        <title>Importin alpha protein acts as a negative regulator for Snail protein nuclear import.</title>
        <authorList>
            <person name="Sekimoto T."/>
            <person name="Miyamoto Y."/>
            <person name="Arai S."/>
            <person name="Yoneda Y."/>
        </authorList>
    </citation>
    <scope>INTERACTION WITH KPNB1; KPNA1; KPNA4 AND KPNA2</scope>
</reference>
<reference key="25">
    <citation type="journal article" date="2011" name="Oncogene">
        <title>Poly(ADP-ribose)-dependent regulation of Snail1 protein stability.</title>
        <authorList>
            <person name="Rodriguez M.I."/>
            <person name="Gonzalez-Flores A."/>
            <person name="Dantzer F."/>
            <person name="Collard J."/>
            <person name="de Herreros A.G."/>
            <person name="Oliver F.J."/>
        </authorList>
    </citation>
    <scope>INTERACTION WITH PARP1</scope>
    <scope>SUBCELLULAR LOCATION</scope>
    <scope>ADP-RIBOSYLATION BY PARP1</scope>
</reference>
<reference key="26">
    <citation type="journal article" date="2011" name="Sci. Signal.">
        <title>System-wide temporal characterization of the proteome and phosphoproteome of human embryonic stem cell differentiation.</title>
        <authorList>
            <person name="Rigbolt K.T."/>
            <person name="Prokhorova T.A."/>
            <person name="Akimov V."/>
            <person name="Henningsen J."/>
            <person name="Johansen P.T."/>
            <person name="Kratchmarova I."/>
            <person name="Kassem M."/>
            <person name="Mann M."/>
            <person name="Olsen J.V."/>
            <person name="Blagoev B."/>
        </authorList>
    </citation>
    <scope>IDENTIFICATION BY MASS SPECTROMETRY [LARGE SCALE ANALYSIS]</scope>
</reference>
<reference key="27">
    <citation type="journal article" date="2012" name="EMBO J.">
        <title>Lats2 kinase potentiates Snail1 activity by promoting nuclear retention upon phosphorylation.</title>
        <authorList>
            <person name="Zhang K."/>
            <person name="Rodriguez-Aznar E."/>
            <person name="Yabuta N."/>
            <person name="Owen R.J."/>
            <person name="Mingot J.M."/>
            <person name="Nojima H."/>
            <person name="Nieto M.A."/>
            <person name="Longmore G.D."/>
        </authorList>
    </citation>
    <scope>IDENTIFICATION BY MASS SPECTROMETRY</scope>
    <scope>FUNCTION</scope>
    <scope>SUBCELLULAR LOCATION</scope>
    <scope>PHOSPHORYLATION AT THR-203 BY LATS2</scope>
    <scope>MUTAGENESIS OF THR-203</scope>
</reference>
<reference key="28">
    <citation type="journal article" date="2014" name="Nucleic Acids Res.">
        <title>Nuclear ubiquitination by FBXL5 modulates Snail1 DNA binding and stability.</title>
        <authorList>
            <person name="Vinas-Castells R."/>
            <person name="Frias A."/>
            <person name="Robles-Lanuza E."/>
            <person name="Zhang K."/>
            <person name="Longmore G.D."/>
            <person name="Garcia de Herreros A."/>
            <person name="Diaz V.M."/>
        </authorList>
    </citation>
    <scope>SUBCELLULAR LOCATION</scope>
    <scope>UBIQUITINATION BY FBXL5</scope>
    <scope>PHOSPHORYLATION BY LATS2</scope>
</reference>
<reference key="29">
    <citation type="journal article" date="2016" name="Oncogene">
        <title>Syntenin regulates TGF-beta1-induced Smad activation and the epithelial-to-mesenchymal transition by inhibiting caveolin-mediated TGF-beta type I receptor internalization.</title>
        <authorList>
            <person name="Hwangbo C."/>
            <person name="Tae N."/>
            <person name="Lee S."/>
            <person name="Kim O."/>
            <person name="Park O.K."/>
            <person name="Kim J."/>
            <person name="Kwon S.H."/>
            <person name="Lee J.H."/>
        </authorList>
    </citation>
    <scope>SUBCELLULAR LOCATION</scope>
</reference>
<reference key="30">
    <citation type="journal article" date="2015" name="Cancer Lett.">
        <title>FBXO11 promotes ubiquitination of the Snail family of transcription factors in cancer progression and epidermal development.</title>
        <authorList>
            <person name="Jin Y."/>
            <person name="Shenoy A.K."/>
            <person name="Doernberg S."/>
            <person name="Chen H."/>
            <person name="Luo H."/>
            <person name="Shen H."/>
            <person name="Lin T."/>
            <person name="Tarrash M."/>
            <person name="Cai Q."/>
            <person name="Hu X."/>
            <person name="Fiske R."/>
            <person name="Chen T."/>
            <person name="Wu L."/>
            <person name="Mohammed K.A."/>
            <person name="Rottiers V."/>
            <person name="Lee S.S."/>
            <person name="Lu J."/>
        </authorList>
    </citation>
    <scope>FUNCTION</scope>
    <scope>SUBCELLULAR LOCATION</scope>
    <scope>UBIQUITINATION</scope>
    <scope>PHOSPHORYLATION</scope>
    <scope>MUTAGENESIS OF SER-96; SER-100; SER-107; SER-111; SER-115 AND SER-119</scope>
</reference>
<reference key="31">
    <citation type="journal article" date="2018" name="Oncogene">
        <title>SPSB3 targets SNAIL for degradation in GSK-3beta phosphorylation-dependent manner and regulates metastasis.</title>
        <authorList>
            <person name="Liu Y."/>
            <person name="Zhou H."/>
            <person name="Zhu R."/>
            <person name="Ding F."/>
            <person name="Li Y."/>
            <person name="Cao X."/>
            <person name="Liu Z."/>
        </authorList>
    </citation>
    <scope>UBIQUITINATION</scope>
    <scope>PHOSPHORYLATION</scope>
    <scope>MUTAGENESIS OF SER-96; SER-100; SER-107; SER-111; SER-115 AND SER-119</scope>
</reference>
<reference key="32">
    <citation type="journal article" date="2019" name="Am. J. Cancer Res.">
        <title>USP37 is a SNAI1 deubiquitinase.</title>
        <authorList>
            <person name="Xiao Z."/>
            <person name="Chang L."/>
            <person name="Kim J."/>
            <person name="Zhang P."/>
            <person name="Hang Q."/>
            <person name="Yap S."/>
            <person name="Guo Y."/>
            <person name="Zhou Z."/>
            <person name="Zeng L."/>
            <person name="Hu X."/>
            <person name="Siverly A."/>
            <person name="Sun Y."/>
            <person name="Ma L."/>
        </authorList>
    </citation>
    <scope>DEUBIQUITINATION BY USP37</scope>
</reference>
<reference evidence="38" key="33">
    <citation type="journal article" date="2011" name="Structure">
        <title>Molecular mimicry and ligand recognition in binding and catalysis by the histone demethylase LSD1-CoREST complex.</title>
        <authorList>
            <person name="Baron R."/>
            <person name="Binda C."/>
            <person name="Tortorici M."/>
            <person name="McCammon J.A."/>
            <person name="Mattevi A."/>
        </authorList>
    </citation>
    <scope>X-RAY CRYSTALLOGRAPHY (3.00 ANGSTROMS) OF 2-21 IN COMPLEX WITH KDM1A</scope>
    <scope>INTERACTION WITH KDM1A</scope>
    <scope>DOMAIN</scope>
    <scope>FUNCTION</scope>
</reference>
<reference key="34">
    <citation type="journal article" date="2014" name="Acta Crystallogr. D">
        <title>Structural basis for the selective nuclear import of the C2H2 zinc-finger protein Snail by importin beta.</title>
        <authorList>
            <person name="Choi S."/>
            <person name="Yamashita E."/>
            <person name="Yasuhara N."/>
            <person name="Song J."/>
            <person name="Son S.Y."/>
            <person name="Won Y.H."/>
            <person name="Hong H.R."/>
            <person name="Shin Y.S."/>
            <person name="Sekimoto T."/>
            <person name="Park I.Y."/>
            <person name="Yoneda Y."/>
            <person name="Lee S.J."/>
        </authorList>
    </citation>
    <scope>X-RAY CRYSTALLOGRAPHY (2.60 ANGSTROMS) IN COMPLEX WITH ZINC AND KPNB1</scope>
    <scope>INTERACTION WITH KPNB1</scope>
    <scope>SUBCELLULAR LOCATION</scope>
    <scope>MUTAGENESIS OF ARG-191; TRP-193; GLN-196; ARG-224; GLN-228 AND ARG-247</scope>
</reference>
<reference key="35">
    <citation type="journal article" date="2013" name="ACS Chem. Biol.">
        <title>Protein recognition by short peptide reversible inhibitors of the chromatin-modifying LSD1/CoREST lysine demethylase.</title>
        <authorList>
            <person name="Tortorici M."/>
            <person name="Borrello M.T."/>
            <person name="Tardugno M."/>
            <person name="Chiarelli L.R."/>
            <person name="Pilotto S."/>
            <person name="Ciossani G."/>
            <person name="Vellore N.A."/>
            <person name="Bailey S.G."/>
            <person name="Cowan J."/>
            <person name="O'Connell M."/>
            <person name="Crabb S.J."/>
            <person name="Packham G."/>
            <person name="Mai A."/>
            <person name="Baron R."/>
            <person name="Ganesan A."/>
            <person name="Mattevi A."/>
        </authorList>
    </citation>
    <scope>X-RAY CRYSTALLOGRAPHY (3.10 ANGSTROMS) OF 2-7 IN COMPLEX WITH KDM1A</scope>
    <scope>INTERACTION WITH KDM1A</scope>
    <scope>FUNCTION</scope>
</reference>
<comment type="function">
    <text evidence="1 4 7 10 15 18 19 21 24 26 29">Involved in induction of the epithelial to mesenchymal transition (EMT), formation and maintenance of embryonic mesoderm, growth arrest, survival and cell migration (PubMed:10655587, PubMed:15647282, PubMed:20389281, PubMed:20562920, PubMed:21952048, PubMed:25827072). Binds to 3 E-boxes of the E-cadherin/CDH1 gene promoter and to the promoters of CLDN7 and KRT8 and, in association with histone demethylase KDM1A which it recruits to the promoters, causes a decrease in dimethylated H3K4 levels and represses transcription (PubMed:10655587, PubMed:20389281, PubMed:20562920). The N-terminal SNAG domain competes with histone H3 for the same binding site on the histone demethylase complex formed by KDM1A and RCOR1, and thereby inhibits demethylation of histone H3 at 'Lys-4' (in vitro) (PubMed:20389281, PubMed:21300290, PubMed:23721412). During EMT, involved with LOXL2 in negatively regulating pericentromeric heterochromatin transcription (PubMed:16096638). SNAI1 recruits LOXL2 to pericentromeric regions to oxidize histone H3 and repress transcription which leads to release of heterochromatin component CBX5/HP1A, enabling chromatin reorganization and acquisition of mesenchymal traits (By similarity). Associates with EGR1 and SP1 to mediate tetradecanoyl phorbol acetate (TPA)-induced up-regulation of CDKN2B, possibly by binding to the CDKN2B promoter region 5'-TCACA-3 (PubMed:20121949). In addition, may also activate the CDKN2B promoter by itself (PubMed:20121949).</text>
</comment>
<comment type="subunit">
    <text evidence="1 9 10 11 12 15 17 18 19 21 22 23 25 26 28">Interacts (via SNAG domain) with WTIP (via LIM domains) (By similarity). Interacts (via SNAG domain) with LIMD1 (via LIM domains), and AJUBA (via LIM domains) (PubMed:18331720). Interacts with LOXL2 and LOXL3 (PubMed:16096638). Interacts with EGR1 upon TPA induction (PubMed:20121949). Interacts (via zinc fingers) with KPNB1 and TNPO1; the interactions mediate nuclear import (PubMed:15836774, PubMed:19386897, PubMed:21454664, PubMed:24699649). Interacts (via zinc fingers) with KPNA1; the interaction disrupts the transport complex with KPNB1 and prevents nuclear import increasing SNAI1 degradation in the cytoplasm (PubMed:21454664). Interacts (via zinc fingers) with KPNA2; the interaction, in combination with KPNB1, mediates nuclear import (PubMed:21454664). Interacts with KPNA4; this interaction mediates nuclear import (PubMed:21454664). May interact (via zinc fingers) with IPO7 (PubMed:19386897). Interacts (via zinc fingers) with PARP1; the interaction requires SNAI1 to be poly-ADP-ribosylated and non-phosphorylated (active) by GSK3B (PubMed:21577210). Interacts (via SNAG domain) with KDM1A (PubMed:20389281, PubMed:20562920, PubMed:21300290, PubMed:23721412). Interaction with KDM1A is necessary for the down-regulation of dimethylated H3K4 mark and promoter activity of E-cadherin/CDH1, CDN7 and KRT8 (PubMed:20389281, PubMed:20562920). Interacts with TP53/p53 and (via zinc fingers) with NOTCH1 (via intracellular domain); the interactions induce SNAI1 degradation via MDM2-mediated ubiquitination and inhibit SNAI1-induced cell invasion (PubMed:20385133). Interacts with MDM2; the interaction promotes SNAI1 ubiquitination (PubMed:20385133, PubMed:22128911).</text>
</comment>
<comment type="interaction">
    <interactant intactId="EBI-1045459">
        <id>O95863</id>
    </interactant>
    <interactant intactId="EBI-77797">
        <id>P35609</id>
        <label>ACTN2</label>
    </interactant>
    <organismsDiffer>false</organismsDiffer>
    <experiments>7</experiments>
</comment>
<comment type="interaction">
    <interactant intactId="EBI-1045459">
        <id>O95863</id>
    </interactant>
    <interactant intactId="EBI-2880652">
        <id>Q08043</id>
        <label>ACTN3</label>
    </interactant>
    <organismsDiffer>false</organismsDiffer>
    <experiments>3</experiments>
</comment>
<comment type="interaction">
    <interactant intactId="EBI-1045459">
        <id>O95863</id>
    </interactant>
    <interactant intactId="EBI-949782">
        <id>Q96IF1</id>
        <label>AJUBA</label>
    </interactant>
    <organismsDiffer>false</organismsDiffer>
    <experiments>3</experiments>
</comment>
<comment type="interaction">
    <interactant intactId="EBI-1045459">
        <id>O95863</id>
    </interactant>
    <interactant intactId="EBI-307461">
        <id>Q9Y297</id>
        <label>BTRC</label>
    </interactant>
    <organismsDiffer>false</organismsDiffer>
    <experiments>2</experiments>
</comment>
<comment type="interaction">
    <interactant intactId="EBI-1045459">
        <id>O95863</id>
    </interactant>
    <interactant intactId="EBI-3866319">
        <id>Q9Y2V7</id>
        <label>COG6</label>
    </interactant>
    <organismsDiffer>false</organismsDiffer>
    <experiments>3</experiments>
</comment>
<comment type="interaction">
    <interactant intactId="EBI-1045459">
        <id>O95863</id>
    </interactant>
    <interactant intactId="EBI-743105">
        <id>Q5JVL4</id>
        <label>EFHC1</label>
    </interactant>
    <organismsDiffer>false</organismsDiffer>
    <experiments>3</experiments>
</comment>
<comment type="interaction">
    <interactant intactId="EBI-1045459">
        <id>O95863</id>
    </interactant>
    <interactant intactId="EBI-447295">
        <id>Q09472</id>
        <label>EP300</label>
    </interactant>
    <organismsDiffer>false</organismsDiffer>
    <experiments>3</experiments>
</comment>
<comment type="interaction">
    <interactant intactId="EBI-1045459">
        <id>O95863</id>
    </interactant>
    <interactant intactId="EBI-371922">
        <id>Q96B26</id>
        <label>EXOSC8</label>
    </interactant>
    <organismsDiffer>false</organismsDiffer>
    <experiments>3</experiments>
</comment>
<comment type="interaction">
    <interactant intactId="EBI-1045459">
        <id>O95863</id>
    </interactant>
    <interactant intactId="EBI-6425532">
        <id>Q8N1E6</id>
        <label>FBXL14</label>
    </interactant>
    <organismsDiffer>false</organismsDiffer>
    <experiments>2</experiments>
</comment>
<comment type="interaction">
    <interactant intactId="EBI-1045459">
        <id>O95863</id>
    </interactant>
    <interactant intactId="EBI-1047804">
        <id>Q86XK2</id>
        <label>FBXO11</label>
    </interactant>
    <organismsDiffer>false</organismsDiffer>
    <experiments>6</experiments>
</comment>
<comment type="interaction">
    <interactant intactId="EBI-1045459">
        <id>O95863</id>
    </interactant>
    <interactant intactId="EBI-701903">
        <id>Q14192</id>
        <label>FHL2</label>
    </interactant>
    <organismsDiffer>false</organismsDiffer>
    <experiments>3</experiments>
</comment>
<comment type="interaction">
    <interactant intactId="EBI-1045459">
        <id>O95863</id>
    </interactant>
    <interactant intactId="EBI-726150">
        <id>Q92990</id>
        <label>GLMN</label>
    </interactant>
    <organismsDiffer>false</organismsDiffer>
    <experiments>3</experiments>
</comment>
<comment type="interaction">
    <interactant intactId="EBI-1045459">
        <id>O95863</id>
    </interactant>
    <interactant intactId="EBI-5916454">
        <id>A6NEM1</id>
        <label>GOLGA6L9</label>
    </interactant>
    <organismsDiffer>false</organismsDiffer>
    <experiments>3</experiments>
</comment>
<comment type="interaction">
    <interactant intactId="EBI-1045459">
        <id>O95863</id>
    </interactant>
    <interactant intactId="EBI-373586">
        <id>P49841</id>
        <label>GSK3B</label>
    </interactant>
    <organismsDiffer>false</organismsDiffer>
    <experiments>5</experiments>
</comment>
<comment type="interaction">
    <interactant intactId="EBI-1045459">
        <id>O95863</id>
    </interactant>
    <interactant intactId="EBI-301834">
        <id>Q13547</id>
        <label>HDAC1</label>
    </interactant>
    <organismsDiffer>false</organismsDiffer>
    <experiments>3</experiments>
</comment>
<comment type="interaction">
    <interactant intactId="EBI-1045459">
        <id>O95863</id>
    </interactant>
    <interactant intactId="EBI-301821">
        <id>Q92769</id>
        <label>HDAC2</label>
    </interactant>
    <organismsDiffer>false</organismsDiffer>
    <experiments>2</experiments>
</comment>
<comment type="interaction">
    <interactant intactId="EBI-1045459">
        <id>O95863</id>
    </interactant>
    <interactant intactId="EBI-710124">
        <id>O60341</id>
        <label>KDM1A</label>
    </interactant>
    <organismsDiffer>false</organismsDiffer>
    <experiments>33</experiments>
</comment>
<comment type="interaction">
    <interactant intactId="EBI-1045459">
        <id>O95863</id>
    </interactant>
    <interactant intactId="EBI-948001">
        <id>Q15323</id>
        <label>KRT31</label>
    </interactant>
    <organismsDiffer>false</organismsDiffer>
    <experiments>4</experiments>
</comment>
<comment type="interaction">
    <interactant intactId="EBI-1045459">
        <id>O95863</id>
    </interactant>
    <interactant intactId="EBI-10171697">
        <id>Q6A162</id>
        <label>KRT40</label>
    </interactant>
    <organismsDiffer>false</organismsDiffer>
    <experiments>4</experiments>
</comment>
<comment type="interaction">
    <interactant intactId="EBI-1045459">
        <id>O95863</id>
    </interactant>
    <interactant intactId="EBI-11959885">
        <id>Q07627</id>
        <label>KRTAP1-1</label>
    </interactant>
    <organismsDiffer>false</organismsDiffer>
    <experiments>3</experiments>
</comment>
<comment type="interaction">
    <interactant intactId="EBI-1045459">
        <id>O95863</id>
    </interactant>
    <interactant intactId="EBI-10172526">
        <id>Q9UJV3-2</id>
        <label>MID2</label>
    </interactant>
    <organismsDiffer>false</organismsDiffer>
    <experiments>3</experiments>
</comment>
<comment type="interaction">
    <interactant intactId="EBI-1045459">
        <id>O95863</id>
    </interactant>
    <interactant intactId="EBI-742948">
        <id>Q5JR59</id>
        <label>MTUS2</label>
    </interactant>
    <organismsDiffer>false</organismsDiffer>
    <experiments>3</experiments>
</comment>
<comment type="interaction">
    <interactant intactId="EBI-1045459">
        <id>O95863</id>
    </interactant>
    <interactant intactId="EBI-945833">
        <id>Q7Z3S9</id>
        <label>NOTCH2NLA</label>
    </interactant>
    <organismsDiffer>false</organismsDiffer>
    <experiments>4</experiments>
</comment>
<comment type="interaction">
    <interactant intactId="EBI-1045459">
        <id>O95863</id>
    </interactant>
    <interactant intactId="EBI-355676">
        <id>P09874</id>
        <label>PARP1</label>
    </interactant>
    <organismsDiffer>false</organismsDiffer>
    <experiments>10</experiments>
</comment>
<comment type="interaction">
    <interactant intactId="EBI-1045459">
        <id>O95863</id>
    </interactant>
    <interactant intactId="EBI-357275">
        <id>Q99471</id>
        <label>PFDN5</label>
    </interactant>
    <organismsDiffer>false</organismsDiffer>
    <experiments>3</experiments>
</comment>
<comment type="interaction">
    <interactant intactId="EBI-1045459">
        <id>O95863</id>
    </interactant>
    <interactant intactId="EBI-73886">
        <id>Q04206</id>
        <label>RELA</label>
    </interactant>
    <organismsDiffer>false</organismsDiffer>
    <experiments>5</experiments>
</comment>
<comment type="interaction">
    <interactant intactId="EBI-1045459">
        <id>O95863</id>
    </interactant>
    <interactant intactId="EBI-714146">
        <id>O14543</id>
        <label>SOCS3</label>
    </interactant>
    <organismsDiffer>false</organismsDiffer>
    <experiments>3</experiments>
</comment>
<comment type="interaction">
    <interactant intactId="EBI-1045459">
        <id>O95863</id>
    </interactant>
    <interactant intactId="EBI-2659201">
        <id>Q96BD6</id>
        <label>SPSB1</label>
    </interactant>
    <organismsDiffer>false</organismsDiffer>
    <experiments>3</experiments>
</comment>
<comment type="interaction">
    <interactant intactId="EBI-1045459">
        <id>O95863</id>
    </interactant>
    <interactant intactId="EBI-366083">
        <id>P04637</id>
        <label>TP53</label>
    </interactant>
    <organismsDiffer>false</organismsDiffer>
    <experiments>2</experiments>
</comment>
<comment type="interaction">
    <interactant intactId="EBI-1045459">
        <id>O95863</id>
    </interactant>
    <interactant intactId="EBI-355744">
        <id>Q12933</id>
        <label>TRAF2</label>
    </interactant>
    <organismsDiffer>false</organismsDiffer>
    <experiments>3</experiments>
</comment>
<comment type="interaction">
    <interactant intactId="EBI-1045459">
        <id>O95863</id>
    </interactant>
    <interactant intactId="EBI-740098">
        <id>P36406</id>
        <label>TRIM23</label>
    </interactant>
    <organismsDiffer>false</organismsDiffer>
    <experiments>7</experiments>
</comment>
<comment type="interaction">
    <interactant intactId="EBI-1045459">
        <id>O95863</id>
    </interactant>
    <interactant intactId="EBI-924214">
        <id>Q9C035</id>
        <label>TRIM5</label>
    </interactant>
    <organismsDiffer>false</organismsDiffer>
    <experiments>3</experiments>
</comment>
<comment type="interaction">
    <interactant intactId="EBI-1045459">
        <id>O95863</id>
    </interactant>
    <interactant intactId="EBI-742327">
        <id>Q15654</id>
        <label>TRIP6</label>
    </interactant>
    <organismsDiffer>false</organismsDiffer>
    <experiments>4</experiments>
</comment>
<comment type="interaction">
    <interactant intactId="EBI-1045459">
        <id>O95863</id>
    </interactant>
    <interactant intactId="EBI-296306">
        <id>P45481</id>
        <label>Crebbp</label>
    </interactant>
    <organismsDiffer>true</organismsDiffer>
    <experiments>7</experiments>
</comment>
<comment type="interaction">
    <interactant intactId="EBI-1045459">
        <id>O95863</id>
    </interactant>
    <interactant intactId="EBI-397697">
        <id>P63085</id>
        <label>Mapk1</label>
    </interactant>
    <organismsDiffer>true</organismsDiffer>
    <experiments>3</experiments>
</comment>
<comment type="subcellular location">
    <subcellularLocation>
        <location evidence="6 8 18 27 28 29 30">Nucleus</location>
    </subcellularLocation>
    <subcellularLocation>
        <location evidence="6 8">Cytoplasm</location>
    </subcellularLocation>
    <text evidence="6">Once phosphorylated (probably on Ser-107, Ser-111, Ser-115 and Ser-119) it is exported from the nucleus to the cytoplasm where subsequent phosphorylation of the destruction motif and ubiquitination involving BTRC occurs.</text>
</comment>
<comment type="tissue specificity">
    <text evidence="4">Expressed in a variety of tissues with the highest expression in kidney. Expressed in mesenchymal and epithelial cell lines.</text>
</comment>
<comment type="induction">
    <text evidence="15">Induced by TPA maximally by 2.5-fold at 4 hours, in HepG2 cells (at protein level).</text>
</comment>
<comment type="PTM">
    <text evidence="6 7 8 13 16 24 27 29 31">Phosphorylated by GSK3B (PubMed:15448698, PubMed:15647282, PubMed:20305697, PubMed:25827072, PubMed:29059170). Once phosphorylated, it becomes a target for ubiquitination by BTRC, the ECS(SPSB3) or the SCF(FBXO11) complexes (PubMed:15647282, PubMed:29059170). Phosphorylation by CSNK1E, probably at Ser-104, provides the priming site for the subsequent phosphorylation by GSK3B, probably at Ser-100 and Ser-96 (PubMed:19923321, PubMed:20305697). Phosphorylation by PAK1 may modulate its transcriptional activity by promoting increased accumulation in the nucleus (PubMed:15833848). Phosphorylation at Ser-11 and Ser-92 positively regulates its functions in induction of EMT and cell survival, respectively (PubMed:19923321). Phosphorylation by LATS2, upon mitotic stress, oncogenic stress or Hippo pathway activation, occurs in the nucleus and promotes nuclear retention and stabilization of total cellular protein level (PubMed:21952048, PubMed:24157836).</text>
</comment>
<comment type="PTM">
    <text evidence="14 17 27 29 31 32">Ubiquitinated on Lys-98, Lys-137 and Lys-146 by FBXL14 and BTRC leading to degradation (PubMed:19955572). BTRC-triggered ubiquitination requires previous GSK3B-mediated SNAI1 phosphorylation (PubMed:19955572). Ubiquitinated by the SCF(FBXO11) complex; ubiquitination requires previous GSK3B-mediated SNAI1 phosphorylation (PubMed:25827072). Ubiquitinated by the ECS(SPSB3) complex; ubiquitination requires previous GSK3B-mediated SNAI1 phosphorylation (PubMed:29059170). Ubiquitination induced upon interaction with NOTCH1 or TP53/p53 is mediated by MDM2 (PubMed:20385133). Ubiquitinated in a FBXL5-dependent manner; preventing interaction with DNA and promoting its degradation (PubMed:24157836). Deubiquitinated by USP37; leading to stabilization (PubMed:31911859).</text>
</comment>
<comment type="PTM">
    <text>O-GlcNAcylation at Ser-112 is enhanced in hyperglycaemic conditions, it opposes phosphorylation by GSK3B, and stabilizes the protein.</text>
</comment>
<comment type="PTM">
    <text>ADP-ribosylation by PARP1 increases protein half-life and may be involved in TGFB-induced SNAI1 up-regulation.</text>
</comment>
<comment type="similarity">
    <text evidence="33">Belongs to the snail C2H2-type zinc-finger protein family.</text>
</comment>
<comment type="caution">
    <text evidence="37">The interaction with mouse KPNA2 may prevent SNAI1 nuclear import.</text>
</comment>
<comment type="online information" name="Atlas of Genetics and Cytogenetics in Oncology and Haematology">
    <link uri="https://atlasgeneticsoncology.org/gene/452/SNAI1"/>
</comment>
<organism>
    <name type="scientific">Homo sapiens</name>
    <name type="common">Human</name>
    <dbReference type="NCBI Taxonomy" id="9606"/>
    <lineage>
        <taxon>Eukaryota</taxon>
        <taxon>Metazoa</taxon>
        <taxon>Chordata</taxon>
        <taxon>Craniata</taxon>
        <taxon>Vertebrata</taxon>
        <taxon>Euteleostomi</taxon>
        <taxon>Mammalia</taxon>
        <taxon>Eutheria</taxon>
        <taxon>Euarchontoglires</taxon>
        <taxon>Primates</taxon>
        <taxon>Haplorrhini</taxon>
        <taxon>Catarrhini</taxon>
        <taxon>Hominidae</taxon>
        <taxon>Homo</taxon>
    </lineage>
</organism>